<feature type="chain" id="PRO_0000030411" description="Transforming protein RhoA">
    <location>
        <begin position="1"/>
        <end position="190"/>
    </location>
</feature>
<feature type="propeptide" id="PRO_0000030412" description="Removed in mature form" evidence="1">
    <location>
        <begin position="191"/>
        <end position="193"/>
    </location>
</feature>
<feature type="region of interest" description="Switch II region; involved in RAP1GDS1 isoform 2 binding" evidence="43 61">
    <location>
        <begin position="61"/>
        <end position="78"/>
    </location>
</feature>
<feature type="short sequence motif" description="Effector region" evidence="5">
    <location>
        <begin position="34"/>
        <end position="42"/>
    </location>
</feature>
<feature type="binding site" evidence="9 17">
    <location>
        <begin position="12"/>
        <end position="19"/>
    </location>
    <ligand>
        <name>GTP</name>
        <dbReference type="ChEBI" id="CHEBI:37565"/>
    </ligand>
</feature>
<feature type="binding site" evidence="3">
    <location>
        <begin position="30"/>
        <end position="37"/>
    </location>
    <ligand>
        <name>GTP</name>
        <dbReference type="ChEBI" id="CHEBI:37565"/>
    </ligand>
</feature>
<feature type="binding site" evidence="3">
    <location>
        <begin position="59"/>
        <end position="63"/>
    </location>
    <ligand>
        <name>GTP</name>
        <dbReference type="ChEBI" id="CHEBI:37565"/>
    </ligand>
</feature>
<feature type="binding site" evidence="9 17">
    <location>
        <begin position="117"/>
        <end position="120"/>
    </location>
    <ligand>
        <name>GTP</name>
        <dbReference type="ChEBI" id="CHEBI:37565"/>
    </ligand>
</feature>
<feature type="binding site" evidence="3">
    <location>
        <begin position="160"/>
        <end position="162"/>
    </location>
    <ligand>
        <name>GTP</name>
        <dbReference type="ChEBI" id="CHEBI:37565"/>
    </ligand>
</feature>
<feature type="site" description="(Microbial infection) Cleavage; by yopT" evidence="13 15">
    <location>
        <begin position="189"/>
        <end position="190"/>
    </location>
</feature>
<feature type="modified residue" description="(Microbial infection) O-AMP-tyrosine; by Haemophilus IbpA; alternate" evidence="24">
    <location>
        <position position="34"/>
    </location>
</feature>
<feature type="modified residue" description="(Microbial infection) O-AMP-threonine; by Vibrio VopS" evidence="23">
    <location>
        <position position="37"/>
    </location>
</feature>
<feature type="modified residue" description="(Microbial infection) ADP-ribosylasparagine; by botulinum toxin" evidence="56">
    <location>
        <position position="41"/>
    </location>
</feature>
<feature type="modified residue" description="5-glutamyl serotonin" evidence="4">
    <location>
        <position position="63"/>
    </location>
</feature>
<feature type="modified residue" description="Phosphoserine; by PKG/PRKG1" evidence="11">
    <location>
        <position position="188"/>
    </location>
</feature>
<feature type="modified residue" description="Cysteine methyl ester" evidence="1">
    <location>
        <position position="190"/>
    </location>
</feature>
<feature type="lipid moiety-binding region" description="(Microbial infection) N6-stearoyl lysine" evidence="42">
    <location>
        <position position="185"/>
    </location>
</feature>
<feature type="lipid moiety-binding region" description="(Microbial infection) N6-stearoyl lysine" evidence="42">
    <location>
        <position position="186"/>
    </location>
</feature>
<feature type="lipid moiety-binding region" description="(Microbial infection) N6-stearoyl lysine" evidence="42">
    <location>
        <position position="187"/>
    </location>
</feature>
<feature type="lipid moiety-binding region" description="S-geranylgeranyl cysteine" evidence="1">
    <location>
        <position position="190"/>
    </location>
</feature>
<feature type="glycosylation site" description="(Microbial infection) O-linked (GlcNAc) tyrosine; by Photorhabdus PAU_02230; alternate" evidence="37">
    <location>
        <position position="34"/>
    </location>
</feature>
<feature type="glycosylation site" description="(Microbial infection) O-alpha-linked (GlcNAc) threonine; by C.novyi toxin TcdA; alternate" evidence="50">
    <location>
        <position position="37"/>
    </location>
</feature>
<feature type="glycosylation site" description="(Microbial infection) O-linked (Glc) threonine; by C.difficile toxins TcdA and TcdB; alternate" evidence="38 46 47">
    <location>
        <position position="37"/>
    </location>
</feature>
<feature type="cross-link" description="Glycyl lysine isopeptide (Lys-Gly) (interchain with G-Cter in ubiquitin)" evidence="35">
    <location>
        <position position="135"/>
    </location>
</feature>
<feature type="sequence variant" id="VAR_083545" description="In EDFAOB; somatic mosaic variant; decreased Rho protein signal transduction; decreased substrate adhesion-dependent cell spreading; decreased number of stress fibers assembly; decreased cytoplasmic microtubule organization." evidence="44">
    <original>E</original>
    <variation>K</variation>
    <location>
        <position position="47"/>
    </location>
</feature>
<feature type="sequence variant" id="VAR_083546" description="In EDFAOB; somatic mosaic variant; decreased Rho protein signal transduction; decreased substrate adhesion-dependent cell spreading; decreased stress fibers assembly; decreased cytoplasmic microtubule organization." evidence="44">
    <original>P</original>
    <variation>S</variation>
    <location>
        <position position="71"/>
    </location>
</feature>
<feature type="mutagenesis site" description="Increased Rho protein signal transduction. Constitutively active." evidence="28 44">
    <original>G</original>
    <variation>V</variation>
    <location>
        <position position="14"/>
    </location>
</feature>
<feature type="mutagenesis site" description="Decreased Rho protein signal transduction. Decreased substrate adhesion-dependent cell spreading. Decreased stress fibers assembly. Decreased cytoplasmic microtubule organization." evidence="44">
    <original>T</original>
    <variation>N</variation>
    <location>
        <position position="19"/>
    </location>
</feature>
<feature type="mutagenesis site" description="Abolishes interaction with DGKQ." evidence="6 24">
    <original>Y</original>
    <variation>A</variation>
    <location>
        <position position="34"/>
    </location>
</feature>
<feature type="mutagenesis site" description="Abolishes AMPylation by Haemophilus IbpA." evidence="6 24">
    <original>Y</original>
    <variation>F</variation>
    <location>
        <position position="34"/>
    </location>
</feature>
<feature type="mutagenesis site" description="Abolished monoglucosylation by C.difficile toxin TcdA. Abolished O-GlcNAcylation by C.novyi toxin TcdA." evidence="46 50">
    <original>T</original>
    <variation>A</variation>
    <location>
        <position position="37"/>
    </location>
</feature>
<feature type="mutagenesis site" description="Causes constitutive activation.">
    <original>Q</original>
    <variation>L</variation>
    <location>
        <position position="63"/>
    </location>
</feature>
<feature type="mutagenesis site" description="Reduced FBXL19-mediated ubiquitination and subsequent degradation." evidence="35">
    <original>K</original>
    <variation>R</variation>
    <location>
        <position position="135"/>
    </location>
</feature>
<feature type="mutagenesis site" description="In 3KR mutant; abolished stearoylation in response to S.flexneri infection." evidence="42">
    <original>KKK</original>
    <variation>RRR</variation>
    <location>
        <begin position="185"/>
        <end position="187"/>
    </location>
</feature>
<feature type="mutagenesis site" description="Converts geranyl-geranylation to farnesylation; does not prevent the cleavage by yopT." evidence="15">
    <original>L</original>
    <variation>M</variation>
    <location>
        <position position="193"/>
    </location>
</feature>
<feature type="sequence conflict" description="In Ref. 5; BAD96276." evidence="55" ref="5">
    <original>I</original>
    <variation>T</variation>
    <location>
        <position position="23"/>
    </location>
</feature>
<feature type="strand" evidence="65">
    <location>
        <begin position="4"/>
        <end position="13"/>
    </location>
</feature>
<feature type="helix" evidence="67">
    <location>
        <begin position="14"/>
        <end position="16"/>
    </location>
</feature>
<feature type="helix" evidence="65">
    <location>
        <begin position="18"/>
        <end position="23"/>
    </location>
</feature>
<feature type="strand" evidence="66">
    <location>
        <begin position="27"/>
        <end position="29"/>
    </location>
</feature>
<feature type="strand" evidence="65">
    <location>
        <begin position="42"/>
        <end position="48"/>
    </location>
</feature>
<feature type="strand" evidence="65">
    <location>
        <begin position="51"/>
        <end position="58"/>
    </location>
</feature>
<feature type="helix" evidence="65">
    <location>
        <begin position="64"/>
        <end position="66"/>
    </location>
</feature>
<feature type="turn" evidence="65">
    <location>
        <begin position="67"/>
        <end position="69"/>
    </location>
</feature>
<feature type="helix" evidence="65">
    <location>
        <begin position="70"/>
        <end position="73"/>
    </location>
</feature>
<feature type="strand" evidence="65">
    <location>
        <begin position="78"/>
        <end position="85"/>
    </location>
</feature>
<feature type="helix" evidence="65">
    <location>
        <begin position="89"/>
        <end position="97"/>
    </location>
</feature>
<feature type="helix" evidence="65">
    <location>
        <begin position="99"/>
        <end position="106"/>
    </location>
</feature>
<feature type="strand" evidence="63">
    <location>
        <begin position="107"/>
        <end position="109"/>
    </location>
</feature>
<feature type="strand" evidence="65">
    <location>
        <begin position="112"/>
        <end position="117"/>
    </location>
</feature>
<feature type="helix" evidence="65">
    <location>
        <begin position="119"/>
        <end position="121"/>
    </location>
</feature>
<feature type="helix" evidence="65">
    <location>
        <begin position="125"/>
        <end position="132"/>
    </location>
</feature>
<feature type="turn" evidence="65">
    <location>
        <begin position="133"/>
        <end position="135"/>
    </location>
</feature>
<feature type="helix" evidence="65">
    <location>
        <begin position="141"/>
        <end position="151"/>
    </location>
</feature>
<feature type="strand" evidence="65">
    <location>
        <begin position="154"/>
        <end position="158"/>
    </location>
</feature>
<feature type="turn" evidence="65">
    <location>
        <begin position="161"/>
        <end position="163"/>
    </location>
</feature>
<feature type="helix" evidence="65">
    <location>
        <begin position="167"/>
        <end position="179"/>
    </location>
</feature>
<feature type="turn" evidence="64">
    <location>
        <begin position="182"/>
        <end position="184"/>
    </location>
</feature>
<feature type="strand" evidence="64">
    <location>
        <begin position="185"/>
        <end position="187"/>
    </location>
</feature>
<feature type="strand" evidence="62">
    <location>
        <begin position="190"/>
        <end position="193"/>
    </location>
</feature>
<reference key="1">
    <citation type="journal article" date="1987" name="Nucleic Acids Res.">
        <title>Nucleotide sequence of human rho cDNA clone 12.</title>
        <authorList>
            <person name="Yeramian P."/>
            <person name="Chardin P."/>
            <person name="Madaule P."/>
            <person name="Tavitian A."/>
        </authorList>
    </citation>
    <scope>NUCLEOTIDE SEQUENCE [MRNA]</scope>
</reference>
<reference key="2">
    <citation type="journal article" date="1994" name="Exp. Eye Res.">
        <title>Sequence of rho small GTP-binding protein cDNAs from human retina and identification of novel 5' end cloning artifacts.</title>
        <authorList>
            <person name="Fagan K.P."/>
            <person name="Oliveira L."/>
            <person name="Pittler S.J."/>
        </authorList>
    </citation>
    <scope>NUCLEOTIDE SEQUENCE [MRNA]</scope>
    <source>
        <tissue>Retina</tissue>
    </source>
</reference>
<reference key="3">
    <citation type="submission" date="2002-04" db="EMBL/GenBank/DDBJ databases">
        <title>cDNA clones of human proteins involved in signal transduction sequenced by the Guthrie cDNA resource center (www.cdna.org).</title>
        <authorList>
            <person name="Puhl H.L. III"/>
            <person name="Ikeda S.R."/>
            <person name="Aronstam R.S."/>
        </authorList>
    </citation>
    <scope>NUCLEOTIDE SEQUENCE [LARGE SCALE MRNA]</scope>
    <source>
        <tissue>Brain</tissue>
    </source>
</reference>
<reference key="4">
    <citation type="submission" date="2004-10" db="EMBL/GenBank/DDBJ databases">
        <title>Cloning of human full-length CDSs in BD Creator(TM) system donor vector.</title>
        <authorList>
            <person name="Kalnine N."/>
            <person name="Chen X."/>
            <person name="Rolfs A."/>
            <person name="Halleck A."/>
            <person name="Hines L."/>
            <person name="Eisenstein S."/>
            <person name="Koundinya M."/>
            <person name="Raphael J."/>
            <person name="Moreira D."/>
            <person name="Kelley T."/>
            <person name="LaBaer J."/>
            <person name="Lin Y."/>
            <person name="Phelan M."/>
            <person name="Farmer A."/>
        </authorList>
    </citation>
    <scope>NUCLEOTIDE SEQUENCE [LARGE SCALE MRNA]</scope>
</reference>
<reference key="5">
    <citation type="submission" date="2005-04" db="EMBL/GenBank/DDBJ databases">
        <authorList>
            <person name="Suzuki Y."/>
            <person name="Sugano S."/>
            <person name="Totoki Y."/>
            <person name="Toyoda A."/>
            <person name="Takeda T."/>
            <person name="Sakaki Y."/>
            <person name="Tanaka A."/>
            <person name="Yokoyama S."/>
        </authorList>
    </citation>
    <scope>NUCLEOTIDE SEQUENCE [LARGE SCALE MRNA]</scope>
    <source>
        <tissue>Adipose tissue</tissue>
    </source>
</reference>
<reference key="6">
    <citation type="journal article" date="2007" name="BMC Genomics">
        <title>The full-ORF clone resource of the German cDNA consortium.</title>
        <authorList>
            <person name="Bechtel S."/>
            <person name="Rosenfelder H."/>
            <person name="Duda A."/>
            <person name="Schmidt C.P."/>
            <person name="Ernst U."/>
            <person name="Wellenreuther R."/>
            <person name="Mehrle A."/>
            <person name="Schuster C."/>
            <person name="Bahr A."/>
            <person name="Bloecker H."/>
            <person name="Heubner D."/>
            <person name="Hoerlein A."/>
            <person name="Michel G."/>
            <person name="Wedler H."/>
            <person name="Koehrer K."/>
            <person name="Ottenwaelder B."/>
            <person name="Poustka A."/>
            <person name="Wiemann S."/>
            <person name="Schupp I."/>
        </authorList>
    </citation>
    <scope>NUCLEOTIDE SEQUENCE [LARGE SCALE MRNA]</scope>
    <source>
        <tissue>Esophageal carcinoma</tissue>
    </source>
</reference>
<reference key="7">
    <citation type="journal article" date="2006" name="Nature">
        <title>The DNA sequence, annotation and analysis of human chromosome 3.</title>
        <authorList>
            <person name="Muzny D.M."/>
            <person name="Scherer S.E."/>
            <person name="Kaul R."/>
            <person name="Wang J."/>
            <person name="Yu J."/>
            <person name="Sudbrak R."/>
            <person name="Buhay C.J."/>
            <person name="Chen R."/>
            <person name="Cree A."/>
            <person name="Ding Y."/>
            <person name="Dugan-Rocha S."/>
            <person name="Gill R."/>
            <person name="Gunaratne P."/>
            <person name="Harris R.A."/>
            <person name="Hawes A.C."/>
            <person name="Hernandez J."/>
            <person name="Hodgson A.V."/>
            <person name="Hume J."/>
            <person name="Jackson A."/>
            <person name="Khan Z.M."/>
            <person name="Kovar-Smith C."/>
            <person name="Lewis L.R."/>
            <person name="Lozado R.J."/>
            <person name="Metzker M.L."/>
            <person name="Milosavljevic A."/>
            <person name="Miner G.R."/>
            <person name="Morgan M.B."/>
            <person name="Nazareth L.V."/>
            <person name="Scott G."/>
            <person name="Sodergren E."/>
            <person name="Song X.-Z."/>
            <person name="Steffen D."/>
            <person name="Wei S."/>
            <person name="Wheeler D.A."/>
            <person name="Wright M.W."/>
            <person name="Worley K.C."/>
            <person name="Yuan Y."/>
            <person name="Zhang Z."/>
            <person name="Adams C.Q."/>
            <person name="Ansari-Lari M.A."/>
            <person name="Ayele M."/>
            <person name="Brown M.J."/>
            <person name="Chen G."/>
            <person name="Chen Z."/>
            <person name="Clendenning J."/>
            <person name="Clerc-Blankenburg K.P."/>
            <person name="Chen R."/>
            <person name="Chen Z."/>
            <person name="Davis C."/>
            <person name="Delgado O."/>
            <person name="Dinh H.H."/>
            <person name="Dong W."/>
            <person name="Draper H."/>
            <person name="Ernst S."/>
            <person name="Fu G."/>
            <person name="Gonzalez-Garay M.L."/>
            <person name="Garcia D.K."/>
            <person name="Gillett W."/>
            <person name="Gu J."/>
            <person name="Hao B."/>
            <person name="Haugen E."/>
            <person name="Havlak P."/>
            <person name="He X."/>
            <person name="Hennig S."/>
            <person name="Hu S."/>
            <person name="Huang W."/>
            <person name="Jackson L.R."/>
            <person name="Jacob L.S."/>
            <person name="Kelly S.H."/>
            <person name="Kube M."/>
            <person name="Levy R."/>
            <person name="Li Z."/>
            <person name="Liu B."/>
            <person name="Liu J."/>
            <person name="Liu W."/>
            <person name="Lu J."/>
            <person name="Maheshwari M."/>
            <person name="Nguyen B.-V."/>
            <person name="Okwuonu G.O."/>
            <person name="Palmeiri A."/>
            <person name="Pasternak S."/>
            <person name="Perez L.M."/>
            <person name="Phelps K.A."/>
            <person name="Plopper F.J."/>
            <person name="Qiang B."/>
            <person name="Raymond C."/>
            <person name="Rodriguez R."/>
            <person name="Saenphimmachak C."/>
            <person name="Santibanez J."/>
            <person name="Shen H."/>
            <person name="Shen Y."/>
            <person name="Subramanian S."/>
            <person name="Tabor P.E."/>
            <person name="Verduzco D."/>
            <person name="Waldron L."/>
            <person name="Wang J."/>
            <person name="Wang J."/>
            <person name="Wang Q."/>
            <person name="Williams G.A."/>
            <person name="Wong G.K.-S."/>
            <person name="Yao Z."/>
            <person name="Zhang J."/>
            <person name="Zhang X."/>
            <person name="Zhao G."/>
            <person name="Zhou J."/>
            <person name="Zhou Y."/>
            <person name="Nelson D."/>
            <person name="Lehrach H."/>
            <person name="Reinhardt R."/>
            <person name="Naylor S.L."/>
            <person name="Yang H."/>
            <person name="Olson M."/>
            <person name="Weinstock G."/>
            <person name="Gibbs R.A."/>
        </authorList>
    </citation>
    <scope>NUCLEOTIDE SEQUENCE [LARGE SCALE GENOMIC DNA]</scope>
</reference>
<reference key="8">
    <citation type="journal article" date="2004" name="Genome Res.">
        <title>The status, quality, and expansion of the NIH full-length cDNA project: the Mammalian Gene Collection (MGC).</title>
        <authorList>
            <consortium name="The MGC Project Team"/>
        </authorList>
    </citation>
    <scope>NUCLEOTIDE SEQUENCE [LARGE SCALE MRNA]</scope>
    <source>
        <tissue>Brain</tissue>
        <tissue>Colon</tissue>
    </source>
</reference>
<reference key="9">
    <citation type="journal article" date="1994" name="Gene">
        <title>Utilization of multiple polyadenylation signals in the human RHOA protooncogene.</title>
        <authorList>
            <person name="Moscow J.A."/>
            <person name="He R."/>
            <person name="Gudas J.M."/>
            <person name="Cowan K.H."/>
        </authorList>
    </citation>
    <scope>NUCLEOTIDE SEQUENCE [MRNA] OF 5-193</scope>
    <source>
        <tissue>Mammary cancer</tissue>
    </source>
</reference>
<reference key="10">
    <citation type="journal article" date="1992" name="J. Biol. Chem.">
        <title>A rho gene product in human blood platelets. I. Identification of the platelet substrate for botulinum C3 ADP-ribosyltransferase as rhoA protein.</title>
        <authorList>
            <person name="Nemoto Y."/>
            <person name="Namba T."/>
            <person name="Teru-uchi T."/>
            <person name="Ushikubi F."/>
            <person name="Morii N."/>
            <person name="Narumiya S."/>
        </authorList>
    </citation>
    <scope>PROTEIN SEQUENCE OF 28-39; 45-57; 78-86; 130-144; 146-162 AND 165-184</scope>
    <scope>ADP-RIBOSYLATION AT ASN-41 (MICROBIAL INFECTION)</scope>
    <source>
        <tissue>Platelet</tissue>
    </source>
</reference>
<reference key="11">
    <citation type="journal article" date="1995" name="Nature">
        <title>Glucosylation of Rho proteins by Clostridium difficile toxin B.</title>
        <authorList>
            <person name="Just I."/>
            <person name="Selzer J."/>
            <person name="Wilm M."/>
            <person name="von Eichel-Streiber C."/>
            <person name="Mann M."/>
            <person name="Aktories K."/>
        </authorList>
    </citation>
    <scope>PROTEIN SEQUENCE OF 28-51</scope>
    <scope>GLYCOSYLATION AT THR-37 (MICROBIAL INFECTION)</scope>
</reference>
<reference key="12">
    <citation type="journal article" date="1992" name="J. Biol. Chem.">
        <title>Structure and function of the 5'-flanking sequence of the human cytosolic selenium-dependent glutathione peroxidase gene (hgpx1).</title>
        <authorList>
            <person name="Moscow J.A."/>
            <person name="Morrow C.S."/>
            <person name="He R."/>
            <person name="Mullenbach G.T."/>
            <person name="Cowan K.H."/>
        </authorList>
    </citation>
    <scope>NUCLEOTIDE SEQUENCE [GENOMIC DNA] OF 137-193</scope>
</reference>
<reference key="13">
    <citation type="journal article" date="1995" name="J. Biol. Chem.">
        <title>The enterotoxin from Clostridium difficile (ToxA) monoglucosylates the Rho proteins.</title>
        <authorList>
            <person name="Just I."/>
            <person name="Wilm M."/>
            <person name="Selzer J."/>
            <person name="Rex G."/>
            <person name="von Eichel-Streiber C."/>
            <person name="Mann M."/>
            <person name="Aktories K."/>
        </authorList>
    </citation>
    <scope>GLYCOSYLATION AT THR-37 (MICROBIAL INFECTION)</scope>
    <scope>MUTAGENESIS OF THR-37</scope>
</reference>
<reference key="14">
    <citation type="journal article" date="1996" name="EMBO J.">
        <title>The small GTP-binding protein Rho binds to and activates a 160 kDa Ser/Thr protein kinase homologous to myotonic dystrophy kinase.</title>
        <authorList>
            <person name="Ishizaki T."/>
            <person name="Maekawa M."/>
            <person name="Fujisawa K."/>
            <person name="Okawa K."/>
            <person name="Iwamatsu A."/>
            <person name="Fujita A."/>
            <person name="Watanabe N."/>
            <person name="Saito Y."/>
            <person name="Kakizuka A."/>
            <person name="Morii N."/>
            <person name="Narumiya S."/>
        </authorList>
    </citation>
    <scope>INTERACTION WITH ROCK1</scope>
</reference>
<reference key="15">
    <citation type="journal article" date="1996" name="EMBO J.">
        <title>Rho-associated kinase, a novel serine/threonine kinase, as a putative target for small GTP binding protein Rho.</title>
        <authorList>
            <person name="Matsui T."/>
            <person name="Amano M."/>
            <person name="Yamamoto T."/>
            <person name="Chihara K."/>
            <person name="Nakafuku M."/>
            <person name="Ito M."/>
            <person name="Nakano T."/>
            <person name="Okawa K."/>
            <person name="Iwamatsu A."/>
            <person name="Kaibuchi K."/>
        </authorList>
    </citation>
    <scope>INTERACTION WITH ROCK2</scope>
</reference>
<reference key="16">
    <citation type="journal article" date="1996" name="J. Biol. Chem.">
        <title>Isolation of a NCK-associated kinase, PRK2, an SH3-binding protein and potential effector of Rho protein signaling.</title>
        <authorList>
            <person name="Quilliam L.A."/>
            <person name="Lambert Q.T."/>
            <person name="Mickelson-Young L.A."/>
            <person name="Westwick J.K."/>
            <person name="Sparks A.B."/>
            <person name="Kay B.K."/>
            <person name="Jenkins N.A."/>
            <person name="Gilbert D.J."/>
            <person name="Copeland N.G."/>
            <person name="Der C.J."/>
        </authorList>
    </citation>
    <scope>FUNCTION</scope>
</reference>
<reference key="17">
    <citation type="journal article" date="1996" name="J. Biol. Chem.">
        <title>Clostridium novyi alpha-toxin-catalyzed incorporation of GlcNAc into Rho subfamily proteins.</title>
        <authorList>
            <person name="Selzer J."/>
            <person name="Hofmann F."/>
            <person name="Rex G."/>
            <person name="Wilm M."/>
            <person name="Mann M."/>
            <person name="Just I."/>
            <person name="Aktories K."/>
        </authorList>
    </citation>
    <scope>GLYCOSYLATION AT THR-37 (MICROBIAL INFECTION)</scope>
    <scope>MUTAGENESIS OF THR-37</scope>
</reference>
<reference key="18">
    <citation type="journal article" date="1997" name="Mol. Cell. Biol.">
        <title>The PRK2 kinase is a potential effector target of both Rho and Rac GTPases and regulates actin cytoskeletal organization.</title>
        <authorList>
            <person name="Vincent S."/>
            <person name="Settleman J."/>
        </authorList>
    </citation>
    <scope>FUNCTION</scope>
    <scope>INTERACTION WITH PKN2</scope>
</reference>
<reference key="19">
    <citation type="journal article" date="1998" name="Cell">
        <title>The small GTP-binding protein RhoA regulates a delayed rectifier potassium channel.</title>
        <authorList>
            <person name="Cachero T.G."/>
            <person name="Morielli A.D."/>
            <person name="Peralta E.G."/>
        </authorList>
    </citation>
    <scope>FUNCTION</scope>
    <scope>INTERACTION WITH KCNA2</scope>
    <scope>SUBCELLULAR LOCATION</scope>
</reference>
<reference key="20">
    <citation type="journal article" date="1998" name="J. Biol. Chem.">
        <title>Cloning and characterization of GEF-H1, a microtubule-associated guanine nucleotide exchange factor for Rac and Rho GTPases.</title>
        <authorList>
            <person name="Ren Y."/>
            <person name="Li R."/>
            <person name="Zheng Y."/>
            <person name="Busch H."/>
        </authorList>
    </citation>
    <scope>INTERACTION WITH ARHGEF2</scope>
</reference>
<reference key="21">
    <citation type="journal article" date="1999" name="J. Biol. Chem.">
        <title>Diacylglycerol kinase theta binds to and is negatively regulated by active RhoA.</title>
        <authorList>
            <person name="Houssa B."/>
            <person name="de Widt J."/>
            <person name="Kranenburg O."/>
            <person name="Moolenaar W.H."/>
            <person name="van Blitterswijk W.J."/>
        </authorList>
    </citation>
    <scope>INTERACTION WITH DGKQ</scope>
    <scope>MUTAGENESIS OF TYR-34</scope>
</reference>
<reference key="22">
    <citation type="journal article" date="1999" name="J. Virol.">
        <title>RhoA interacts with the fusion glycoprotein of respiratory syncytial virus and facilitates virus-induced syncytium formation.</title>
        <authorList>
            <person name="Pastey M.K."/>
            <person name="Crowe J.E. Jr."/>
            <person name="Graham B.S."/>
        </authorList>
    </citation>
    <scope>INTERACTION WITH HRSV PROTEIN F (MICROBIAL INFECTION)</scope>
</reference>
<reference key="23">
    <citation type="journal article" date="2000" name="J. Biol. Chem.">
        <title>The PDZ protein TIP-1 interacts with the Rho effector rhotekin and is involved in Rho signaling to the serum response element.</title>
        <authorList>
            <person name="Reynaud C."/>
            <person name="Fabre S."/>
            <person name="Jalinot P."/>
        </authorList>
    </citation>
    <scope>INTERACTION WITH RTKN</scope>
</reference>
<reference key="24">
    <citation type="journal article" date="2001" name="Biochem. Biophys. Res. Commun.">
        <title>cGMP-dependent protein kinase phosphorylates and inactivates RhoA.</title>
        <authorList>
            <person name="Sawada N."/>
            <person name="Itoh H."/>
            <person name="Yamashita J."/>
            <person name="Doi K."/>
            <person name="Inoue M."/>
            <person name="Masatsugu K."/>
            <person name="Fukunaga Y."/>
            <person name="Sakaguchi S."/>
            <person name="Sone M."/>
            <person name="Yamahara K."/>
            <person name="Yurugi T."/>
            <person name="Nakao K."/>
        </authorList>
    </citation>
    <scope>PHOSPHORYLATION AT SER-188 BY PRKG1</scope>
</reference>
<reference key="25">
    <citation type="journal article" date="2001" name="FEBS Lett.">
        <title>Ht31: the first protein kinase A anchoring protein to integrate protein kinase A and Rho signaling.</title>
        <authorList>
            <person name="Klussmann E."/>
            <person name="Edemir B."/>
            <person name="Pepperle B."/>
            <person name="Tamma G."/>
            <person name="Henn V."/>
            <person name="Klauschenz E."/>
            <person name="Hundsrucker C."/>
            <person name="Maric K."/>
            <person name="Rosenthal W."/>
        </authorList>
    </citation>
    <scope>INTERACTION WITH AKAP13</scope>
</reference>
<reference key="26">
    <citation type="journal article" date="2002" name="J. Biol. Chem.">
        <title>XPLN, a guanine nucleotide exchange factor for RhoA and RhoB, but not RhoC.</title>
        <authorList>
            <person name="Arthur W.T."/>
            <person name="Ellerbroek S.M."/>
            <person name="Der C.J."/>
            <person name="Burridge K."/>
            <person name="Wennerberg K."/>
        </authorList>
    </citation>
    <scope>INTERACTION WITH ARHGEF3</scope>
    <scope>ACTIVITY REGULATION</scope>
</reference>
<reference key="27">
    <citation type="journal article" date="2002" name="Cell">
        <title>A Yersinia effector and a Pseudomonas avirulence protein define a family of cysteine proteases functioning in bacterial pathogenesis.</title>
        <authorList>
            <person name="Shao F."/>
            <person name="Merritt P.M."/>
            <person name="Bao Z."/>
            <person name="Innes R.W."/>
            <person name="Dixon J.E."/>
        </authorList>
    </citation>
    <scope>INTERACTION WITH YERSINIA PESTIS YOPT (MICROBIAL INFECTION)</scope>
    <scope>CLEAVAGE (MICROBIAL INFECTION)</scope>
    <scope>FUNCTION (MICROBIAL INFECTION)</scope>
</reference>
<reference key="28">
    <citation type="journal article" date="2003" name="J. Biol. Chem.">
        <title>Novel mechanism of the co-regulation of nuclear transport of SmgGDS and Rac1.</title>
        <authorList>
            <person name="Lanning C.C."/>
            <person name="Ruiz-Velasco R."/>
            <person name="Williams C.L."/>
        </authorList>
    </citation>
    <scope>INTERACTION WITH RAP1GDS1</scope>
    <scope>SUBCELLULAR LOCATION</scope>
</reference>
<reference key="29">
    <citation type="journal article" date="2003" name="J. Biol. Chem.">
        <title>Direct activation of phospholipase C-epsilon by Rho.</title>
        <authorList>
            <person name="Wing M.R."/>
            <person name="Snyder J.T."/>
            <person name="Sondek J."/>
            <person name="Harden T.K."/>
        </authorList>
    </citation>
    <scope>FUNCTION</scope>
    <scope>INTERACTION WITH PLCE1</scope>
</reference>
<reference key="30">
    <citation type="journal article" date="2003" name="Proc. Natl. Acad. Sci. U.S.A.">
        <title>Biochemical characterization of the Yersinia YopT protease: cleavage site and recognition elements in Rho GTPases.</title>
        <authorList>
            <person name="Shao F."/>
            <person name="Vacratsis P.O."/>
            <person name="Bao Z."/>
            <person name="Bowers K.E."/>
            <person name="Fierke C.A."/>
            <person name="Dixon J.E."/>
        </authorList>
    </citation>
    <scope>INTERACTION WITH YERSINIA PSEUDOTUBERCULOSIS YOPT (MICROBIAL INFECTION)</scope>
    <scope>CLEAVAGE (MICROBIAL INFECTION)</scope>
    <scope>MUTAGENESIS OF LEU-193</scope>
    <scope>FUNCTION (MICROBIAL INFECTION)</scope>
</reference>
<reference key="31">
    <citation type="journal article" date="2005" name="J. Cell Biol.">
        <title>An ECT2-centralspindlin complex regulates the localization and function of RhoA.</title>
        <authorList>
            <person name="Yuce O."/>
            <person name="Piekny A."/>
            <person name="Glotzer M."/>
        </authorList>
    </citation>
    <scope>FUNCTION</scope>
    <scope>SUBCELLULAR LOCATION</scope>
</reference>
<reference key="32">
    <citation type="journal article" date="2006" name="Mol. Biol. Cell">
        <title>Dissecting the role of Rho-mediated signaling in contractile ring formation.</title>
        <authorList>
            <person name="Kamijo K."/>
            <person name="Ohara N."/>
            <person name="Abe M."/>
            <person name="Uchimura T."/>
            <person name="Hosoya H."/>
            <person name="Lee J.S."/>
            <person name="Miki T."/>
        </authorList>
    </citation>
    <scope>FUNCTION</scope>
    <scope>SUBCELLULAR LOCATION</scope>
</reference>
<reference key="33">
    <citation type="journal article" date="2006" name="Nat. Cell Biol.">
        <title>The armadillo protein p0071 regulates Rho signalling during cytokinesis.</title>
        <authorList>
            <person name="Wolf A."/>
            <person name="Keil R."/>
            <person name="Gotzl O."/>
            <person name="Mun A."/>
            <person name="Schwarze K."/>
            <person name="Lederer M."/>
            <person name="Huttelmaier S."/>
            <person name="Hatzfeld M."/>
        </authorList>
    </citation>
    <scope>INTERACTION WITH PKP4</scope>
    <scope>SUBCELLULAR LOCATION</scope>
</reference>
<reference key="34">
    <citation type="journal article" date="2009" name="J. Cell Sci.">
        <title>The Rho-family GEF Asef2 activates Rac to modulate adhesion and actin dynamics and thereby regulate cell migration.</title>
        <authorList>
            <person name="Bristow J.M."/>
            <person name="Sellers M.H."/>
            <person name="Majumdar D."/>
            <person name="Anderson B."/>
            <person name="Hu L."/>
            <person name="Webb D.J."/>
        </authorList>
    </citation>
    <scope>FUNCTION</scope>
</reference>
<reference key="35">
    <citation type="journal article" date="2009" name="Mol. Biol. Cell">
        <title>Dual roles for RHOA/RHO-kinase in the regulated trafficking of a voltage-sensitive potassium channel.</title>
        <authorList>
            <person name="Stirling L."/>
            <person name="Williams M.R."/>
            <person name="Morielli A.D."/>
        </authorList>
    </citation>
    <scope>FUNCTION</scope>
</reference>
<reference key="36">
    <citation type="journal article" date="2009" name="Mol. Cell">
        <title>The fic domain: regulation of cell signaling by adenylylation.</title>
        <authorList>
            <person name="Worby C.A."/>
            <person name="Mattoo S."/>
            <person name="Kruger R.P."/>
            <person name="Corbeil L.B."/>
            <person name="Koller A."/>
            <person name="Mendez J.C."/>
            <person name="Zekarias B."/>
            <person name="Lazar C."/>
            <person name="Dixon J.E."/>
        </authorList>
    </citation>
    <scope>AMPYLATION AT TYR-34 (MICROBIAL INFECTION)</scope>
    <scope>MUTAGENESIS OF TYR-34</scope>
</reference>
<reference key="37">
    <citation type="journal article" date="2009" name="Mol. Cell">
        <title>Cullin mediates degradation of RhoA through evolutionarily conserved BTB adaptors to control actin cytoskeleton structure and cell movement.</title>
        <authorList>
            <person name="Chen Y."/>
            <person name="Yang Z."/>
            <person name="Meng M."/>
            <person name="Zhao Y."/>
            <person name="Dong N."/>
            <person name="Yan H."/>
            <person name="Liu L."/>
            <person name="Ding M."/>
            <person name="Peng H.B."/>
            <person name="Shao F."/>
        </authorList>
    </citation>
    <scope>UBIQUITINATION</scope>
</reference>
<reference key="38">
    <citation type="journal article" date="2009" name="Science">
        <title>AMPylation of Rho GTPases by Vibrio VopS disrupts effector binding and downstream signaling.</title>
        <authorList>
            <person name="Yarbrough M.L."/>
            <person name="Li Y."/>
            <person name="Kinch L.N."/>
            <person name="Grishin N.V."/>
            <person name="Ball H.L."/>
            <person name="Orth K."/>
        </authorList>
    </citation>
    <scope>AMPYLATION AT THR-37 (MICROBIAL INFECTION)</scope>
</reference>
<reference key="39">
    <citation type="journal article" date="2010" name="J. Biol. Chem.">
        <title>Activated Rac1 GTPase translocates protein phosphatase 5 to the cell membrane and stimulates phosphatase activity in vitro.</title>
        <authorList>
            <person name="Chatterjee A."/>
            <person name="Wang L."/>
            <person name="Armstrong D.L."/>
            <person name="Rossie S."/>
        </authorList>
    </citation>
    <scope>MUTAGENESIS OF GLY-14</scope>
</reference>
<reference key="40">
    <citation type="journal article" date="2010" name="J. Biol. Chem.">
        <title>Splice variants of SmgGDS control small GTPase prenylation and membrane localization.</title>
        <authorList>
            <person name="Berg T.J."/>
            <person name="Gastonguay A.J."/>
            <person name="Lorimer E.L."/>
            <person name="Kuhnmuench J.R."/>
            <person name="Li R."/>
            <person name="Fields A.P."/>
            <person name="Williams C.L."/>
        </authorList>
    </citation>
    <scope>INTERACTION WITH RAP1GDS1</scope>
</reference>
<reference key="41">
    <citation type="journal article" date="2010" name="Nat. Cell Biol.">
        <title>Regulation of Rho GTPase crosstalk, degradation and activity by RhoGDI1.</title>
        <authorList>
            <person name="Boulter E."/>
            <person name="Garcia-Mata R."/>
            <person name="Guilluy C."/>
            <person name="Dubash A."/>
            <person name="Rossi G."/>
            <person name="Brennwald P.J."/>
            <person name="Burridge K."/>
        </authorList>
    </citation>
    <scope>INTERACTION WITH ARHGDIA</scope>
    <scope>ACTIVITY REGULATION</scope>
</reference>
<reference key="42">
    <citation type="journal article" date="2010" name="Proc. Natl. Acad. Sci. U.S.A.">
        <title>ErbB2 receptor controls microtubule capture by recruiting ACF7 to the plasma membrane of migrating cells.</title>
        <authorList>
            <person name="Zaoui K."/>
            <person name="Benseddik K."/>
            <person name="Daou P."/>
            <person name="Salaun D."/>
            <person name="Badache A."/>
        </authorList>
    </citation>
    <scope>FUNCTION</scope>
</reference>
<reference key="43">
    <citation type="journal article" date="2011" name="BMC Syst. Biol.">
        <title>Initial characterization of the human central proteome.</title>
        <authorList>
            <person name="Burkard T.R."/>
            <person name="Planyavsky M."/>
            <person name="Kaupe I."/>
            <person name="Breitwieser F.P."/>
            <person name="Buerckstuemmer T."/>
            <person name="Bennett K.L."/>
            <person name="Superti-Furga G."/>
            <person name="Colinge J."/>
        </authorList>
    </citation>
    <scope>IDENTIFICATION BY MASS SPECTROMETRY [LARGE SCALE ANALYSIS]</scope>
</reference>
<reference key="44">
    <citation type="journal article" date="2011" name="Biochem. Biophys. Res. Commun.">
        <title>ARHGAP30 is a Wrch-1-interacting protein involved in actin dynamics and cell adhesion.</title>
        <authorList>
            <person name="Naji L."/>
            <person name="Pacholsky D."/>
            <person name="Aspenstrom P."/>
        </authorList>
    </citation>
    <scope>ACTIVITY REGULATION</scope>
    <scope>CATALYTIC ACTIVITY</scope>
</reference>
<reference key="45">
    <citation type="journal article" date="2011" name="Breast Cancer Res. Treat.">
        <title>RACK1 promotes breast carcinoma migration/metastasis via activation of the RhoA/Rho kinase pathway.</title>
        <authorList>
            <person name="Cao X.X."/>
            <person name="Xu J.D."/>
            <person name="Xu J.W."/>
            <person name="Liu X.L."/>
            <person name="Cheng Y.Y."/>
            <person name="Li Q.Q."/>
            <person name="Xu Z.D."/>
            <person name="Liu X.P."/>
        </authorList>
    </citation>
    <scope>INTERACTION WITH RACK1</scope>
</reference>
<reference key="46">
    <citation type="journal article" date="2011" name="Mol. Cell. Biol.">
        <title>The Rho target PRK2 regulates apical junction formation in human bronchial epithelial cells.</title>
        <authorList>
            <person name="Wallace S.W."/>
            <person name="Magalhaes A."/>
            <person name="Hall A."/>
        </authorList>
    </citation>
    <scope>FUNCTION</scope>
    <scope>INTERACTION WITH PKN2</scope>
</reference>
<reference key="47">
    <citation type="journal article" date="2013" name="J. Cell Biol.">
        <title>The GEF Bcr activates RhoA/MAL signaling to promote keratinocyte differentiation via desmoglein-1.</title>
        <authorList>
            <person name="Dubash A.D."/>
            <person name="Koetsier J.L."/>
            <person name="Amargo E.V."/>
            <person name="Najor N.A."/>
            <person name="Harmon R.M."/>
            <person name="Green K.J."/>
        </authorList>
    </citation>
    <scope>FUNCTION</scope>
    <scope>ACTIVITY REGULATION</scope>
    <scope>CATALYTIC ACTIVITY</scope>
</reference>
<reference key="48">
    <citation type="journal article" date="2013" name="Mol. Biol. Cell">
        <title>cAMP-stimulated phosphorylation of diaphanous 1 regulates protein stability and interaction with binding partners in adrenocortical cells.</title>
        <authorList>
            <person name="Li D."/>
            <person name="Dammer E.B."/>
            <person name="Lucki N.C."/>
            <person name="Sewer M.B."/>
        </authorList>
    </citation>
    <scope>INTERACTION WITH DIAPH1</scope>
    <scope>IDENTIFICATION BY MASS SPECTROMETRY</scope>
</reference>
<reference key="49">
    <citation type="journal article" date="2013" name="Nat. Struct. Mol. Biol.">
        <title>A bacterial toxin catalyzing tyrosine glycosylation of Rho and deamidation of Gq and Gi proteins.</title>
        <authorList>
            <person name="Jank T."/>
            <person name="Bogdanovic X."/>
            <person name="Wirth C."/>
            <person name="Haaf E."/>
            <person name="Spoerner M."/>
            <person name="Boehmer K.E."/>
            <person name="Steinemann M."/>
            <person name="Orth J.H."/>
            <person name="Kalbitzer H.R."/>
            <person name="Warscheid B."/>
            <person name="Hunte C."/>
            <person name="Aktories K."/>
        </authorList>
    </citation>
    <scope>GLYCOSYLATION AT TYR-34 (MICROBIAL INFECTION)</scope>
</reference>
<reference key="50">
    <citation type="journal article" date="2013" name="Biochim. Biophys. Acta">
        <title>A new mechanism of RhoA ubiquitination and degradation: roles of SCF(FBXL19) E3 ligase and Erk2.</title>
        <authorList>
            <person name="Wei J."/>
            <person name="Mialki R.K."/>
            <person name="Dong S."/>
            <person name="Khoo A."/>
            <person name="Mallampalli R.K."/>
            <person name="Zhao Y."/>
            <person name="Zhao J."/>
        </authorList>
    </citation>
    <scope>FUNCTION</scope>
    <scope>SUBCELLULAR LOCATION</scope>
    <scope>MUTAGENESIS OF LYS-135</scope>
    <scope>UBIQUITINATION AT LYS-135</scope>
</reference>
<reference key="51">
    <citation type="journal article" date="2014" name="Cell. Microbiol.">
        <title>Haemorrhagic toxin and lethal toxin from Clostridium sordellii strain vpi9048: molecular characterization and comparative analysis of substrate specificity of the large clostridial glucosylating toxins.</title>
        <authorList>
            <person name="Genth H."/>
            <person name="Pauillac S."/>
            <person name="Schelle I."/>
            <person name="Bouvet P."/>
            <person name="Bouchier C."/>
            <person name="Varela-Chavez C."/>
            <person name="Just I."/>
            <person name="Popoff M.R."/>
        </authorList>
    </citation>
    <scope>GLYCOSYLATION AT THR-37 (MICROBIAL INFECTION)</scope>
</reference>
<reference key="52">
    <citation type="journal article" date="2015" name="J. Cell Sci.">
        <title>Front-signal-dependent accumulation of the RHOA inhibitor FAM65B at leading edges polarizes neutrophils.</title>
        <authorList>
            <person name="Gao K."/>
            <person name="Tang W."/>
            <person name="Li Y."/>
            <person name="Zhang P."/>
            <person name="Wang D."/>
            <person name="Yu L."/>
            <person name="Wang C."/>
            <person name="Wu D."/>
        </authorList>
    </citation>
    <scope>INTERACTION WITH RIPOR2</scope>
</reference>
<reference key="53">
    <citation type="journal article" date="2015" name="Proteomics">
        <title>N-terminome analysis of the human mitochondrial proteome.</title>
        <authorList>
            <person name="Vaca Jacome A.S."/>
            <person name="Rabilloud T."/>
            <person name="Schaeffer-Reiss C."/>
            <person name="Rompais M."/>
            <person name="Ayoub D."/>
            <person name="Lane L."/>
            <person name="Bairoch A."/>
            <person name="Van Dorsselaer A."/>
            <person name="Carapito C."/>
        </authorList>
    </citation>
    <scope>IDENTIFICATION BY MASS SPECTROMETRY [LARGE SCALE ANALYSIS]</scope>
</reference>
<reference key="54">
    <citation type="journal article" date="2016" name="J. Cell Sci.">
        <title>RHO binding to FAM65A regulates Golgi reorientation during cell migration.</title>
        <authorList>
            <person name="Mardakheh F.K."/>
            <person name="Self A."/>
            <person name="Marshall C.J."/>
        </authorList>
    </citation>
    <scope>INTERACTION WITH RIPOR1</scope>
</reference>
<reference key="55">
    <citation type="journal article" date="2017" name="J. Biol. Chem.">
        <title>Structure-based analysis of the guanine nucleotide exchange factor SmgGDS reveals armadillo-repeat motifs and key regions for activity and GTPase binding.</title>
        <authorList>
            <person name="Shimizu H."/>
            <person name="Toma-Fukai S."/>
            <person name="Saijo S."/>
            <person name="Shimizu N."/>
            <person name="Kontani K."/>
            <person name="Katada T."/>
            <person name="Shimizu T."/>
        </authorList>
    </citation>
    <scope>INTERACTION WITH RAP1GDS1</scope>
</reference>
<reference key="56">
    <citation type="journal article" date="2020" name="Proc. Natl. Acad. Sci. U.S.A.">
        <title>Structure and regulation of human epithelial cell transforming 2 protein.</title>
        <authorList>
            <person name="Chen M."/>
            <person name="Pan H."/>
            <person name="Sun L."/>
            <person name="Shi P."/>
            <person name="Zhang Y."/>
            <person name="Li L."/>
            <person name="Huang Y."/>
            <person name="Chen J."/>
            <person name="Jiang P."/>
            <person name="Fang X."/>
            <person name="Wu C."/>
            <person name="Chen Z."/>
        </authorList>
    </citation>
    <scope>FUNCTION</scope>
    <scope>INTERACTION WITH ECT2</scope>
</reference>
<reference key="57">
    <citation type="journal article" date="2019" name="Nat. Genet.">
        <title>Postzygotic inactivating mutations of RHOA cause a mosaic neuroectodermal syndrome.</title>
        <authorList>
            <person name="Vabres P."/>
            <person name="Sorlin A."/>
            <person name="Kholmanskikh S.S."/>
            <person name="Demeer B."/>
            <person name="St-Onge J."/>
            <person name="Duffourd Y."/>
            <person name="Kuentz P."/>
            <person name="Courcet J.B."/>
            <person name="Carmignac V."/>
            <person name="Garret P."/>
            <person name="Bessis D."/>
            <person name="Boute O."/>
            <person name="Bron A."/>
            <person name="Captier G."/>
            <person name="Carmi E."/>
            <person name="Devauchelle B."/>
            <person name="Genevieve D."/>
            <person name="Gondry-Jouet C."/>
            <person name="Guibaud L."/>
            <person name="Lafon A."/>
            <person name="Mathieu-Dramard M."/>
            <person name="Thevenon J."/>
            <person name="Dobyns W.B."/>
            <person name="Bernard G."/>
            <person name="Polubothu S."/>
            <person name="Faravelli F."/>
            <person name="Kinsler V.A."/>
            <person name="Thauvin C."/>
            <person name="Faivre L."/>
            <person name="Ross M.E."/>
            <person name="Riviere J.B."/>
        </authorList>
    </citation>
    <scope>INVOLVEMENT IN EDFAOB</scope>
    <scope>VARIANTS EDFAOB LYS-47 AND SER-71</scope>
    <scope>CHARACTERIZATION OF VARIANTS EDFAOB LYS-47 AND SER-71</scope>
    <scope>FUNCTION</scope>
    <scope>MUTAGENESIS OF GLY-14 AND THR-19</scope>
</reference>
<reference key="58">
    <citation type="journal article" date="2018" name="Nat. Microbiol.">
        <title>Nepsilon-fatty acylation of multiple membrane-associated proteins by Shigella IcsB effector to modulate host function.</title>
        <authorList>
            <person name="Liu W."/>
            <person name="Zhou Y."/>
            <person name="Peng T."/>
            <person name="Zhou P."/>
            <person name="Ding X."/>
            <person name="Li Z."/>
            <person name="Zhong H."/>
            <person name="Xu Y."/>
            <person name="Chen S."/>
            <person name="Hang H.C."/>
            <person name="Shao F."/>
        </authorList>
    </citation>
    <scope>STEAROYLATION AT LYS-185; LYS-186 AND LYS-187 (MICROBIAL INFECTION)</scope>
    <scope>MUTAGENESIS OF 185-LYS--LYS-187</scope>
</reference>
<reference key="59">
    <citation type="journal article" date="1997" name="Nat. Struct. Biol.">
        <title>Crystal structure of RhoA-GDP and its functional implications.</title>
        <authorList>
            <person name="Wei Y."/>
            <person name="Zhang Y."/>
            <person name="Derewenda U."/>
            <person name="Liu X."/>
            <person name="Minor W."/>
            <person name="Nakamoto R.K."/>
            <person name="Somlyo A.V."/>
            <person name="Somlyo A.P."/>
            <person name="Derewenda Z.S."/>
        </authorList>
    </citation>
    <scope>X-RAY CRYSTALLOGRAPHY (2.1 ANGSTROMS)</scope>
</reference>
<reference key="60">
    <citation type="journal article" date="1998" name="J. Biol. Chem.">
        <title>Crystal structure of human RhoA in a dominantly active form complexed with a GTP analogue.</title>
        <authorList>
            <person name="Ihara K."/>
            <person name="Muraguchi S."/>
            <person name="Kato M."/>
            <person name="Shimizu T."/>
            <person name="Shirakawa M."/>
            <person name="Kuroda S."/>
            <person name="Kaibuchi K."/>
            <person name="Hakoshima T."/>
        </authorList>
    </citation>
    <scope>X-RAY CRYSTALLOGRAPHY (2.4 ANGSTROMS) OF 4-181 OF MUTANT VAL-14</scope>
</reference>
<reference key="61">
    <citation type="journal article" date="1999" name="J. Struct. Biol.">
        <title>Biochemical and crystallographic characterization of a Rho effector domain of the protein serine/threonine kinase N in a complex with RhoA.</title>
        <authorList>
            <person name="Maesaki R."/>
            <person name="Shimizu T."/>
            <person name="Ihara K."/>
            <person name="Kuroda S."/>
            <person name="Kaibuchi K."/>
            <person name="Hakoshima T."/>
        </authorList>
    </citation>
    <scope>X-RAY CRYSTALLOGRAPHY (2.2 ANGSTROMS) OF 1-181 IN COMPLEX WITH PRKCL1</scope>
</reference>
<reference key="62">
    <citation type="journal article" date="2000" name="J. Biol. Chem.">
        <title>An open conformation of switch I revealed by the crystal structure of a Mg2+-free form of RHOA complexed with GDP. Implications for the GDP/GTP exchange mechanism.</title>
        <authorList>
            <person name="Shimizu T."/>
            <person name="Ihara K."/>
            <person name="Maesaki R."/>
            <person name="Kuroda S."/>
            <person name="Kaibuchi K."/>
            <person name="Hakoshima T."/>
        </authorList>
    </citation>
    <scope>X-RAY CRYSTALLOGRAPHY (2.0 ANGSTROMS) OF 3-180 IN COMPLEX WITH GDP</scope>
</reference>
<reference key="63">
    <citation type="journal article" date="2002" name="Chem. Biol.">
        <title>MgF(3)(-) as a transition state analog of phosphoryl transfer.</title>
        <authorList>
            <person name="Graham D.L."/>
            <person name="Lowe P.N."/>
            <person name="Grime G.W."/>
            <person name="Marsh M."/>
            <person name="Rittinger K."/>
            <person name="Smerdon S.J."/>
            <person name="Gamblin S.J."/>
            <person name="Eccleston J.F."/>
        </authorList>
    </citation>
    <scope>X-RAY CRYSTALLOGRAPHY (1.8 ANGSTROMS)</scope>
</reference>
<reference key="64">
    <citation type="journal article" date="2002" name="Nat. Struct. Biol.">
        <title>Structural basis for the selective activation of Rho GTPases by Dbl exchange factors.</title>
        <authorList>
            <person name="Snyder J.T."/>
            <person name="Worthylake D.K."/>
            <person name="Rossman K.L."/>
            <person name="Betts L."/>
            <person name="Pruitt W.M."/>
            <person name="Siderovski D.P."/>
            <person name="Der C.J."/>
            <person name="Sondek J."/>
        </authorList>
    </citation>
    <scope>X-RAY CRYSTALLOGRAPHY (2.81 ANGSTROMS) IN COMPLEX WITH MCF2</scope>
</reference>
<reference key="65">
    <citation type="journal article" date="2003" name="Acta Crystallogr. D">
        <title>Structure of a constitutively activated RhoA mutant (Q63L) at 1.55 A resolution.</title>
        <authorList>
            <person name="Longenecker K."/>
            <person name="Read P."/>
            <person name="Lin S.-K."/>
            <person name="Somlyo A.P."/>
            <person name="Nakamoto R.K."/>
            <person name="Derewenda Z.S."/>
        </authorList>
    </citation>
    <scope>X-RAY CRYSTALLOGRAPHY (1.5 ANGSTROMS) OF MUTANT LEU-63 IN COMPLEX WITH A GTP ANALOG AND MG(2+)</scope>
</reference>
<reference evidence="61" key="66">
    <citation type="journal article" date="2018" name="Proc. Natl. Acad. Sci. U.S.A.">
        <title>GEF mechanism revealed by the structure of SmgGDS-558 and farnesylated RhoA complex and its implication for a chaperone mechanism.</title>
        <authorList>
            <person name="Shimizu H."/>
            <person name="Toma-Fukai S."/>
            <person name="Kontani K."/>
            <person name="Katada T."/>
            <person name="Shimizu T."/>
        </authorList>
    </citation>
    <scope>X-RAY CRYSTALLOGRAPHY (3.50 ANGSTROMS) IN COMPLEX WITH RAP1GDS1 ISOFORM 2</scope>
    <scope>INTERACTION WITH RAP1GDS1</scope>
</reference>
<accession>P61586</accession>
<accession>P06749</accession>
<accession>Q53HM4</accession>
<accession>Q5U024</accession>
<accession>Q9UDJ0</accession>
<accession>Q9UEJ4</accession>
<protein>
    <recommendedName>
        <fullName evidence="55">Transforming protein RhoA</fullName>
        <ecNumber evidence="34 36">3.6.5.2</ecNumber>
    </recommendedName>
    <alternativeName>
        <fullName>Rho cDNA clone 12</fullName>
        <shortName>h12</shortName>
    </alternativeName>
</protein>
<comment type="function">
    <text evidence="2 4 18 20 21 25 27 32 33 35 36 44 45 51 52 53">Small GTPase which cycles between an active GTP-bound and an inactive GDP-bound state. Mainly associated with cytoskeleton organization, in active state binds to a variety of effector proteins to regulate cellular responses such as cytoskeletal dynamics, cell migration and cell cycle (PubMed:23871831). Regulates a signal transduction pathway linking plasma membrane receptors to the assembly of focal adhesions and actin stress fibers (PubMed:31570889, PubMed:8910519, PubMed:9121475). Involved in a microtubule-dependent signal that is required for the myosin contractile ring formation during cell cycle cytokinesis (PubMed:12900402, PubMed:16236794). Plays an essential role in cleavage furrow formation. Required for the apical junction formation of keratinocyte cell-cell adhesion (PubMed:20974804, PubMed:23940119). Essential for the SPATA13-mediated regulation of cell migration and adhesion assembly and disassembly (PubMed:19934221). The MEMO1-RHOA-DIAPH1 signaling pathway plays an important role in ERBB2-dependent stabilization of microtubules at the cell cortex. It controls the localization of APC and CLASP2 to the cell membrane, via the regulation of GSK3B activity. In turn, membrane-bound APC allows the localization of the MACF1 to the cell membrane, which is required for microtubule capture and stabilization (PubMed:20937854). Regulates KCNA2 potassium channel activity by reducing its location at the cell surface in response to CHRM1 activation; promotes KCNA2 endocytosis (PubMed:19403695, PubMed:9635436). Acts as an allosteric activator of guanine nucleotide exchange factor ECT2 by binding in its activated GTP-bound form to the PH domain of ECT2 which stimulates the release of PH inhibition and promotes the binding of substrate RHOA to the ECT2 catalytic center (PubMed:31888991). May be an activator of PLCE1 (PubMed:16103226). In neurons, involved in the inhibition of the initial spine growth. Upon activation by CaMKII, modulates dendritic spine structural plasticity by relaying CaMKII transient activation to synapse-specific, long-term signaling (By similarity). Acts as a regulator of platelet alpha-granule release during activation and aggregation of platelets (By similarity). When activated by DAAM1 may signal centrosome maturation and chromosomal segregation during cell division. May also be involved in contractile ring formation during cytokinesis.</text>
</comment>
<comment type="function">
    <text evidence="13 15">(Microbial infection) Serves as a target for the yopT cysteine peptidase from Yersinia pestis, vector of the plague.</text>
</comment>
<comment type="catalytic activity">
    <reaction evidence="34 36">
        <text>GTP + H2O = GDP + phosphate + H(+)</text>
        <dbReference type="Rhea" id="RHEA:19669"/>
        <dbReference type="ChEBI" id="CHEBI:15377"/>
        <dbReference type="ChEBI" id="CHEBI:15378"/>
        <dbReference type="ChEBI" id="CHEBI:37565"/>
        <dbReference type="ChEBI" id="CHEBI:43474"/>
        <dbReference type="ChEBI" id="CHEBI:58189"/>
        <dbReference type="EC" id="3.6.5.2"/>
    </reaction>
    <physiologicalReaction direction="left-to-right" evidence="57 58">
        <dbReference type="Rhea" id="RHEA:19670"/>
    </physiologicalReaction>
</comment>
<comment type="cofactor">
    <cofactor evidence="17">
        <name>Mg(2+)</name>
        <dbReference type="ChEBI" id="CHEBI:18420"/>
    </cofactor>
</comment>
<comment type="activity regulation">
    <text evidence="14 29 34 36">Regulated by guanine nucleotide exchange factors (GEFs) which promote the exchange of bound GDP for free GTP, GTPase activating proteins (GAPs) which increase the GTP hydrolysis activity and GDP dissociation inhibitors which inhibit the dissociation of the nucleotide from the GTPase. Activated by GEFs such as ARHGEF2, ARHGEF3, ARHGEF28 and BCR (PubMed:12221096, PubMed:23940119). Inhibited by GAPs such as ARHGAP30 (PubMed:21565175). Inhibited by GDP dissociation inhibitors such as ARHGDIA (PubMed:20400958).</text>
</comment>
<comment type="subunit">
    <text evidence="4 6 7 10 12 14 16 18 22 29 30 31 33 39 40 41 43 45 48 49 52 54 59">Interacts with ARHGEF28 (By similarity). Interacts (via GTP-bound form) with RIPOR1 (via N-terminus); this interaction links RHOA to STK24 and STK26 kinases (PubMed:27807006). Interacts with RIPOR2 (via active GTP- or inactive GDP-bound forms) isoform 1 and isoform 2; these interactions are direct, block the loading of GTP to RHOA and decrease upon chemokine CCL19 stimulation in primary T lymphocytes (PubMed:25588844). Binds PRKCL1, ROCK1 and ROCK2 (PubMed:10388627, PubMed:8617235, PubMed:8641286). Interacts with ARHGEF2, ARHGEF3, NET1 and RTKN (PubMed:10940294, PubMed:12221096, PubMed:9857026). Interacts with PLCE1 and AKAP13 (PubMed:11696353, PubMed:12900402). Interacts with DIAPH1 (PubMed:23325789). Interacts (in the constitutively activated, GTP-bound form) with DGKQ (PubMed:10066731). Interacts with RACK1; enhances RHOA activation (PubMed:20499158). Interacts with PKP4; the interaction is detected at the midbody (PubMed:17115030). Interacts (GTP-bound form preferentially) with PKN2; the interaction stimulates autophosphorylation and phosphorylation of PKN2 (PubMed:20974804, PubMed:9121475). Interacts with ARHGDIA; this interaction inactivates and stabilizes RHOA (PubMed:20400958). Interacts with ARHGDIB. Interacts (GTP-bound form) with KCNA2 (via cytoplasmic N-terminal domain) (PubMed:9635436). Interacts (GTP-bound form) with ECT2; the interaction results in allosteric activation of ECT2 (PubMed:31888991). Interacts with RAP1GDS1; the interaction is direct and in a 1:1 stoichiometry (PubMed:12551911, PubMed:20709748, PubMed:28630045, PubMed:30190425).</text>
</comment>
<comment type="subunit">
    <text evidence="13 15">(Microbial infection) Interacts with yopT from Yersinia pestis.</text>
</comment>
<comment type="subunit">
    <text evidence="8">(Microbial infection) Interacts with human respiratory syncytial virus (HRSV) protein F; this interaction facilitates virus-induced syncytium formation.</text>
</comment>
<comment type="interaction">
    <interactant intactId="EBI-446668">
        <id>P61586</id>
    </interactant>
    <interactant intactId="EBI-1646426">
        <id>Q15109</id>
        <label>AGER</label>
    </interactant>
    <organismsDiffer>false</organismsDiffer>
    <experiments>2</experiments>
</comment>
<comment type="interaction">
    <interactant intactId="EBI-446668">
        <id>P61586</id>
    </interactant>
    <interactant intactId="EBI-17714371">
        <id>Q7Z6G8-3</id>
        <label>ANKS1B</label>
    </interactant>
    <organismsDiffer>false</organismsDiffer>
    <experiments>3</experiments>
</comment>
<comment type="interaction">
    <interactant intactId="EBI-446668">
        <id>P61586</id>
    </interactant>
    <interactant intactId="EBI-77613">
        <id>P05067</id>
        <label>APP</label>
    </interactant>
    <organismsDiffer>false</organismsDiffer>
    <experiments>3</experiments>
</comment>
<comment type="interaction">
    <interactant intactId="EBI-446668">
        <id>P61586</id>
    </interactant>
    <interactant intactId="EBI-602762">
        <id>Q07960</id>
        <label>ARHGAP1</label>
    </interactant>
    <organismsDiffer>false</organismsDiffer>
    <experiments>3</experiments>
</comment>
<comment type="interaction">
    <interactant intactId="EBI-446668">
        <id>P61586</id>
    </interactant>
    <interactant intactId="EBI-712693">
        <id>P52565</id>
        <label>ARHGDIA</label>
    </interactant>
    <organismsDiffer>false</organismsDiffer>
    <experiments>6</experiments>
</comment>
<comment type="interaction">
    <interactant intactId="EBI-446668">
        <id>P61586</id>
    </interactant>
    <interactant intactId="EBI-311099">
        <id>O15085</id>
        <label>ARHGEF11</label>
    </interactant>
    <organismsDiffer>false</organismsDiffer>
    <experiments>12</experiments>
</comment>
<comment type="interaction">
    <interactant intactId="EBI-446668">
        <id>P61586</id>
    </interactant>
    <interactant intactId="EBI-821440">
        <id>Q9NZN5</id>
        <label>ARHGEF12</label>
    </interactant>
    <organismsDiffer>false</organismsDiffer>
    <experiments>4</experiments>
</comment>
<comment type="interaction">
    <interactant intactId="EBI-446668">
        <id>P61586</id>
    </interactant>
    <interactant intactId="EBI-7799822">
        <id>Q8IW93</id>
        <label>ARHGEF19</label>
    </interactant>
    <organismsDiffer>false</organismsDiffer>
    <experiments>2</experiments>
</comment>
<comment type="interaction">
    <interactant intactId="EBI-446668">
        <id>P61586</id>
    </interactant>
    <interactant intactId="EBI-302405">
        <id>Q92974</id>
        <label>ARHGEF2</label>
    </interactant>
    <organismsDiffer>false</organismsDiffer>
    <experiments>5</experiments>
</comment>
<comment type="interaction">
    <interactant intactId="EBI-446668">
        <id>P61586</id>
    </interactant>
    <interactant intactId="EBI-602199">
        <id>Q12774</id>
        <label>ARHGEF5</label>
    </interactant>
    <organismsDiffer>false</organismsDiffer>
    <experiments>2</experiments>
</comment>
<comment type="interaction">
    <interactant intactId="EBI-446668">
        <id>P61586</id>
    </interactant>
    <interactant intactId="EBI-519280">
        <id>P46527</id>
        <label>CDKN1B</label>
    </interactant>
    <organismsDiffer>false</organismsDiffer>
    <experiments>3</experiments>
</comment>
<comment type="interaction">
    <interactant intactId="EBI-446668">
        <id>P61586</id>
    </interactant>
    <interactant intactId="EBI-2817289">
        <id>Q9Y4D1</id>
        <label>DAAM1</label>
    </interactant>
    <organismsDiffer>false</organismsDiffer>
    <experiments>10</experiments>
</comment>
<comment type="interaction">
    <interactant intactId="EBI-446668">
        <id>P61586</id>
    </interactant>
    <interactant intactId="EBI-3959709">
        <id>O60610</id>
        <label>DIAPH1</label>
    </interactant>
    <organismsDiffer>false</organismsDiffer>
    <experiments>3</experiments>
</comment>
<comment type="interaction">
    <interactant intactId="EBI-446668">
        <id>P61586</id>
    </interactant>
    <interactant intactId="EBI-747204">
        <id>Q9UKT9</id>
        <label>IKZF3</label>
    </interactant>
    <organismsDiffer>false</organismsDiffer>
    <experiments>3</experiments>
</comment>
<comment type="interaction">
    <interactant intactId="EBI-446668">
        <id>P61586</id>
    </interactant>
    <interactant intactId="EBI-346967">
        <id>P19338</id>
        <label>NCL</label>
    </interactant>
    <organismsDiffer>false</organismsDiffer>
    <experiments>3</experiments>
</comment>
<comment type="interaction">
    <interactant intactId="EBI-446668">
        <id>P61586</id>
    </interactant>
    <interactant intactId="EBI-2798942">
        <id>Q9Y4F9</id>
        <label>RIPOR2</label>
    </interactant>
    <organismsDiffer>false</organismsDiffer>
    <experiments>4</experiments>
</comment>
<comment type="interaction">
    <interactant intactId="EBI-446668">
        <id>P61586</id>
    </interactant>
    <interactant intactId="EBI-14509742">
        <id>Q9Y4F9-2</id>
        <label>RIPOR2</label>
    </interactant>
    <organismsDiffer>false</organismsDiffer>
    <experiments>3</experiments>
</comment>
<comment type="interaction">
    <interactant intactId="EBI-446668">
        <id>P61586</id>
    </interactant>
    <interactant intactId="EBI-12010512">
        <id>Q96MK2</id>
        <label>RIPOR3</label>
    </interactant>
    <organismsDiffer>false</organismsDiffer>
    <experiments>4</experiments>
</comment>
<comment type="interaction">
    <interactant intactId="EBI-446668">
        <id>P61586</id>
    </interactant>
    <interactant intactId="EBI-876651">
        <id>Q13464</id>
        <label>ROCK1</label>
    </interactant>
    <organismsDiffer>false</organismsDiffer>
    <experiments>4</experiments>
</comment>
<comment type="interaction">
    <interactant intactId="EBI-446668">
        <id>P61586</id>
    </interactant>
    <interactant intactId="EBI-446694">
        <id>Q9BST9</id>
        <label>RTKN</label>
    </interactant>
    <organismsDiffer>false</organismsDiffer>
    <experiments>9</experiments>
</comment>
<comment type="interaction">
    <interactant intactId="EBI-446668">
        <id>P61586</id>
    </interactant>
    <interactant intactId="EBI-1040141">
        <id>Q15796</id>
        <label>SMAD2</label>
    </interactant>
    <organismsDiffer>false</organismsDiffer>
    <experiments>2</experiments>
</comment>
<comment type="interaction">
    <interactant intactId="EBI-446668">
        <id>P61586</id>
    </interactant>
    <interactant intactId="EBI-9845742">
        <id>Q9HCE7-2</id>
        <label>SMURF1</label>
    </interactant>
    <organismsDiffer>false</organismsDiffer>
    <experiments>2</experiments>
</comment>
<comment type="interaction">
    <interactant intactId="EBI-446668">
        <id>P61586</id>
    </interactant>
    <interactant intactId="EBI-742327">
        <id>Q15654</id>
        <label>TRIP6</label>
    </interactant>
    <organismsDiffer>false</organismsDiffer>
    <experiments>3</experiments>
</comment>
<comment type="interaction">
    <interactant intactId="EBI-446668">
        <id>P61586</id>
    </interactant>
    <interactant intactId="EBI-1026445">
        <id>O08808</id>
        <label>Diaph1</label>
    </interactant>
    <organismsDiffer>true</organismsDiffer>
    <experiments>3</experiments>
</comment>
<comment type="interaction">
    <interactant intactId="EBI-446668">
        <id>P61586</id>
    </interactant>
    <interactant intactId="EBI-602149">
        <id>Q6PDM6</id>
        <label>Mcf2l</label>
    </interactant>
    <organismsDiffer>true</organismsDiffer>
    <experiments>3</experiments>
</comment>
<comment type="interaction">
    <interactant intactId="EBI-446668">
        <id>P61586</id>
    </interactant>
    <interactant intactId="EBI-476965">
        <id>Q9Z0S9</id>
        <label>Rabac1</label>
    </interactant>
    <organismsDiffer>true</organismsDiffer>
    <experiments>2</experiments>
</comment>
<comment type="interaction">
    <interactant intactId="EBI-446668">
        <id>P61586</id>
    </interactant>
    <interactant intactId="EBI-1162441">
        <id>Q8C6B2</id>
        <label>Rtkn</label>
    </interactant>
    <organismsDiffer>true</organismsDiffer>
    <experiments>4</experiments>
</comment>
<comment type="interaction">
    <interactant intactId="EBI-446668">
        <id>P61586</id>
    </interactant>
    <interactant intactId="EBI-10760263">
        <id>A0A0F6B1Q8</id>
        <label>sseJ</label>
    </interactant>
    <organismsDiffer>true</organismsDiffer>
    <experiments>10</experiments>
</comment>
<comment type="interaction">
    <interactant intactId="EBI-446668">
        <id>P61586</id>
    </interactant>
    <interactant intactId="EBI-10690199">
        <id>Q9FD10</id>
        <label>sseJ</label>
    </interactant>
    <organismsDiffer>true</organismsDiffer>
    <experiments>3</experiments>
</comment>
<comment type="subcellular location">
    <subcellularLocation>
        <location>Cell membrane</location>
        <topology>Lipid-anchor</topology>
        <orientation>Cytoplasmic side</orientation>
    </subcellularLocation>
    <subcellularLocation>
        <location>Cytoplasm</location>
        <location>Cytoskeleton</location>
    </subcellularLocation>
    <subcellularLocation>
        <location>Cleavage furrow</location>
    </subcellularLocation>
    <subcellularLocation>
        <location evidence="53">Cytoplasm</location>
        <location evidence="53">Cell cortex</location>
    </subcellularLocation>
    <subcellularLocation>
        <location>Midbody</location>
    </subcellularLocation>
    <subcellularLocation>
        <location evidence="4">Cell projection</location>
        <location evidence="4">Lamellipodium</location>
    </subcellularLocation>
    <subcellularLocation>
        <location evidence="4">Cell projection</location>
        <location evidence="4">Dendrite</location>
    </subcellularLocation>
    <subcellularLocation>
        <location evidence="16">Nucleus</location>
    </subcellularLocation>
    <subcellularLocation>
        <location evidence="35">Cytoplasm</location>
    </subcellularLocation>
    <text evidence="4">Localized to cell-cell contacts in calcium-treated keratinocytes (By similarity). Translocates to the equatorial region before furrow formation in a ECT2-dependent manner. Localizes to the equatorial cell cortex (at the site of the presumptive furrow) in early anaphase in an activated form and in a myosin- and actin-independent manner. Colocalizes with KANK1 at the contractile ring. Colocalizes with DAAM1 and KANK1 around centrosomes.</text>
</comment>
<comment type="domain">
    <text evidence="13 15">(Microbial infection) The basic-rich region is essential for yopT recognition and cleavage.</text>
</comment>
<comment type="PTM">
    <text evidence="19">(Microbial infection) Substrate for botulinum ADP-ribosyltransferase.</text>
</comment>
<comment type="PTM">
    <text evidence="13 15">(Microbial infection) Cleaved by yopT protease when the cell is infected by some Yersinia pathogens. This removes the lipid attachment, and leads to its displacement from plasma membrane and to subsequent cytoskeleton cleavage.</text>
</comment>
<comment type="PTM">
    <text evidence="23 24">(Microbial infection) AMPylation at Tyr-34 and Thr-37 are mediated by bacterial enzymes in case of infection by H.somnus and V.parahaemolyticus, respectively. AMPylation occurs in the effector region and leads to inactivation of the GTPase activity by preventing the interaction with downstream effectors, thereby inhibiting actin assembly in infected cells. It is unclear whether some human enzyme mediates AMPylation; FICD has such ability in vitro but additional experiments remain to be done to confirm results in vivo.</text>
</comment>
<comment type="PTM">
    <text evidence="37">(Microbial infection) Glycosylated at Tyr-34 by Photorhabdus asymbiotica toxin PAU_02230. Mono-O-GlcNAcylation by PAU_02230 inhibits downstream signaling by an impaired interaction with diverse regulator and effector proteins of Rho and leads to actin disassembly.</text>
</comment>
<comment type="PTM">
    <text evidence="38 46 47">(Microbial infection) Glucosylated at Thr-37 by C.difficile toxins TcdA and TcdB in the colonic epithelium (PubMed:24905543, PubMed:7775453, PubMed:7777059). Monoglucosylation completely prevents the recognition of the downstream effector, blocking the GTPases in their inactive form, leading to actin cytoskeleton disruption and cell death, resulting in the loss of colonic epithelial barrier function (PubMed:7775453, PubMed:7777059).</text>
</comment>
<comment type="PTM">
    <text evidence="50">(Microbial infection) Glycosylated (O-GlcNAcylated) at Thr-37 by C.novyi toxin TcdA (PubMed:8810274). O-GlcNAcylation completely prevents the recognition of the downstream effector, blocking the GTPases in their inactive form, leading to actin cytoskeleton disruption (PubMed:8810274).</text>
</comment>
<comment type="PTM">
    <text evidence="42">(Microbial infection) Stearoylated By S.flexneri N-epsilon-fatty acyltransferase IcsB, thereby disrupting the host actin cytoskeleton.</text>
</comment>
<comment type="PTM">
    <text evidence="2 11">Phosphorylation by PRKG1 at Ser-188 inactivates RHOA signaling (PubMed:11162591). Phosphorylation by SLK at Ser-188 in response to AGTR2 activation (By similarity).</text>
</comment>
<comment type="PTM">
    <text evidence="26 35">Ubiquitinated by the BCR(KCTD13) and BCR(TNFAIP1) E3 ubiquitin ligase complexes, leading to its degradation by the proteasome, thereby regulating the actin cytoskeleton and synaptic transmission in neurons (PubMed:19782033). Ubiquitinated at Lys-135 in a FBXL19-mediated manner; leading to proteasomal degradation (PubMed:23871831).</text>
</comment>
<comment type="PTM">
    <text evidence="4">Serotonylation of Gln-63 by TGM2 during activation and aggregation of platelets leads to constitutive activation of GTPase activity.</text>
</comment>
<comment type="disease" evidence="44">
    <disease id="DI-05728">
        <name>Ectodermal dysplasia with facial dysmorphism and acral, ocular, and brain anomalies</name>
        <acronym>EDFAOB</acronym>
        <description>A neuroectodermal syndrome characterized by linear hypopigmentation, alopecia, apparently asymptomatic leukoencephalopathy, and facial, ocular, dental and acral anomalies. Patients show no intellectual or neurologic impairment.</description>
        <dbReference type="MIM" id="618727"/>
    </disease>
    <text>The disease is caused by variants affecting the gene represented in this entry.</text>
</comment>
<comment type="similarity">
    <text evidence="55">Belongs to the small GTPase superfamily. Rho family.</text>
</comment>
<comment type="online information" name="Atlas of Genetics and Cytogenetics in Oncology and Haematology">
    <link uri="https://atlasgeneticsoncology.org/gene/42107/RHOA"/>
</comment>
<gene>
    <name evidence="60" type="primary">RHOA</name>
    <name type="synonym">ARH12</name>
    <name type="synonym">ARHA</name>
    <name type="synonym">RHO12</name>
</gene>
<name>RHOA_HUMAN</name>
<organism>
    <name type="scientific">Homo sapiens</name>
    <name type="common">Human</name>
    <dbReference type="NCBI Taxonomy" id="9606"/>
    <lineage>
        <taxon>Eukaryota</taxon>
        <taxon>Metazoa</taxon>
        <taxon>Chordata</taxon>
        <taxon>Craniata</taxon>
        <taxon>Vertebrata</taxon>
        <taxon>Euteleostomi</taxon>
        <taxon>Mammalia</taxon>
        <taxon>Eutheria</taxon>
        <taxon>Euarchontoglires</taxon>
        <taxon>Primates</taxon>
        <taxon>Haplorrhini</taxon>
        <taxon>Catarrhini</taxon>
        <taxon>Hominidae</taxon>
        <taxon>Homo</taxon>
    </lineage>
</organism>
<dbReference type="EC" id="3.6.5.2" evidence="34 36"/>
<dbReference type="EMBL" id="X05026">
    <property type="protein sequence ID" value="CAA28690.1"/>
    <property type="molecule type" value="mRNA"/>
</dbReference>
<dbReference type="EMBL" id="L25080">
    <property type="protein sequence ID" value="AAC33178.1"/>
    <property type="molecule type" value="mRNA"/>
</dbReference>
<dbReference type="EMBL" id="AF498970">
    <property type="protein sequence ID" value="AAM21117.1"/>
    <property type="molecule type" value="mRNA"/>
</dbReference>
<dbReference type="EMBL" id="BT019870">
    <property type="protein sequence ID" value="AAV38673.1"/>
    <property type="molecule type" value="mRNA"/>
</dbReference>
<dbReference type="EMBL" id="AK222556">
    <property type="protein sequence ID" value="BAD96276.1"/>
    <property type="molecule type" value="mRNA"/>
</dbReference>
<dbReference type="EMBL" id="BX647063">
    <property type="protein sequence ID" value="CAE46190.1"/>
    <property type="molecule type" value="mRNA"/>
</dbReference>
<dbReference type="EMBL" id="AC104452">
    <property type="status" value="NOT_ANNOTATED_CDS"/>
    <property type="molecule type" value="Genomic_DNA"/>
</dbReference>
<dbReference type="EMBL" id="AC121247">
    <property type="status" value="NOT_ANNOTATED_CDS"/>
    <property type="molecule type" value="Genomic_DNA"/>
</dbReference>
<dbReference type="EMBL" id="AC137114">
    <property type="status" value="NOT_ANNOTATED_CDS"/>
    <property type="molecule type" value="Genomic_DNA"/>
</dbReference>
<dbReference type="EMBL" id="BC001360">
    <property type="protein sequence ID" value="AAH01360.1"/>
    <property type="molecule type" value="mRNA"/>
</dbReference>
<dbReference type="EMBL" id="BC005976">
    <property type="protein sequence ID" value="AAH05976.1"/>
    <property type="molecule type" value="mRNA"/>
</dbReference>
<dbReference type="EMBL" id="L09159">
    <property type="protein sequence ID" value="AAA50612.1"/>
    <property type="molecule type" value="mRNA"/>
</dbReference>
<dbReference type="EMBL" id="M83094">
    <property type="protein sequence ID" value="AAA67539.1"/>
    <property type="molecule type" value="Genomic_DNA"/>
</dbReference>
<dbReference type="CCDS" id="CCDS2795.1"/>
<dbReference type="PIR" id="A26675">
    <property type="entry name" value="TVHU12"/>
</dbReference>
<dbReference type="RefSeq" id="NP_001300870.1">
    <property type="nucleotide sequence ID" value="NM_001313941.2"/>
</dbReference>
<dbReference type="RefSeq" id="NP_001655.1">
    <property type="nucleotide sequence ID" value="NM_001664.4"/>
</dbReference>
<dbReference type="PDB" id="1A2B">
    <property type="method" value="X-ray"/>
    <property type="resolution" value="2.40 A"/>
    <property type="chains" value="A=1-181"/>
</dbReference>
<dbReference type="PDB" id="1CC0">
    <property type="method" value="X-ray"/>
    <property type="resolution" value="5.00 A"/>
    <property type="chains" value="A/C=1-190"/>
</dbReference>
<dbReference type="PDB" id="1CXZ">
    <property type="method" value="X-ray"/>
    <property type="resolution" value="2.20 A"/>
    <property type="chains" value="A=1-181"/>
</dbReference>
<dbReference type="PDB" id="1DPF">
    <property type="method" value="X-ray"/>
    <property type="resolution" value="2.00 A"/>
    <property type="chains" value="A=1-180"/>
</dbReference>
<dbReference type="PDB" id="1FTN">
    <property type="method" value="X-ray"/>
    <property type="resolution" value="2.10 A"/>
    <property type="chains" value="A=1-193"/>
</dbReference>
<dbReference type="PDB" id="1KMQ">
    <property type="method" value="X-ray"/>
    <property type="resolution" value="1.55 A"/>
    <property type="chains" value="A=4-181"/>
</dbReference>
<dbReference type="PDB" id="1LB1">
    <property type="method" value="X-ray"/>
    <property type="resolution" value="2.81 A"/>
    <property type="chains" value="B/D/F/H=1-190"/>
</dbReference>
<dbReference type="PDB" id="1OW3">
    <property type="method" value="X-ray"/>
    <property type="resolution" value="1.80 A"/>
    <property type="chains" value="B=1-193"/>
</dbReference>
<dbReference type="PDB" id="1S1C">
    <property type="method" value="X-ray"/>
    <property type="resolution" value="2.60 A"/>
    <property type="chains" value="A/B=1-181"/>
</dbReference>
<dbReference type="PDB" id="1TX4">
    <property type="method" value="X-ray"/>
    <property type="resolution" value="1.65 A"/>
    <property type="chains" value="B=3-179"/>
</dbReference>
<dbReference type="PDB" id="1X86">
    <property type="method" value="X-ray"/>
    <property type="resolution" value="3.22 A"/>
    <property type="chains" value="B/D/F/H=1-193"/>
</dbReference>
<dbReference type="PDB" id="1XCG">
    <property type="method" value="X-ray"/>
    <property type="resolution" value="2.50 A"/>
    <property type="chains" value="B/F=3-180"/>
</dbReference>
<dbReference type="PDB" id="2RGN">
    <property type="method" value="X-ray"/>
    <property type="resolution" value="3.50 A"/>
    <property type="chains" value="C/F=1-193"/>
</dbReference>
<dbReference type="PDB" id="3KZ1">
    <property type="method" value="X-ray"/>
    <property type="resolution" value="2.70 A"/>
    <property type="chains" value="E/F=1-181"/>
</dbReference>
<dbReference type="PDB" id="3LW8">
    <property type="method" value="X-ray"/>
    <property type="resolution" value="1.85 A"/>
    <property type="chains" value="A/B/C/D=2-181"/>
</dbReference>
<dbReference type="PDB" id="3LWN">
    <property type="method" value="X-ray"/>
    <property type="resolution" value="2.28 A"/>
    <property type="chains" value="A/B=2-181"/>
</dbReference>
<dbReference type="PDB" id="3LXR">
    <property type="method" value="X-ray"/>
    <property type="resolution" value="1.68 A"/>
    <property type="chains" value="A=2-181"/>
</dbReference>
<dbReference type="PDB" id="3MSX">
    <property type="method" value="X-ray"/>
    <property type="resolution" value="1.65 A"/>
    <property type="chains" value="A=1-180"/>
</dbReference>
<dbReference type="PDB" id="3T06">
    <property type="method" value="X-ray"/>
    <property type="resolution" value="2.84 A"/>
    <property type="chains" value="B/F=3-180"/>
</dbReference>
<dbReference type="PDB" id="4D0N">
    <property type="method" value="X-ray"/>
    <property type="resolution" value="2.10 A"/>
    <property type="chains" value="A=1-184"/>
</dbReference>
<dbReference type="PDB" id="4XH9">
    <property type="method" value="X-ray"/>
    <property type="resolution" value="2.00 A"/>
    <property type="chains" value="B/E=2-180"/>
</dbReference>
<dbReference type="PDB" id="4XOI">
    <property type="method" value="X-ray"/>
    <property type="resolution" value="2.09 A"/>
    <property type="chains" value="A/C=1-180"/>
</dbReference>
<dbReference type="PDB" id="4XSG">
    <property type="method" value="X-ray"/>
    <property type="resolution" value="1.80 A"/>
    <property type="chains" value="A=1-179"/>
</dbReference>
<dbReference type="PDB" id="4XSH">
    <property type="method" value="X-ray"/>
    <property type="resolution" value="2.50 A"/>
    <property type="chains" value="A=1-179"/>
</dbReference>
<dbReference type="PDB" id="5A0F">
    <property type="method" value="X-ray"/>
    <property type="resolution" value="2.00 A"/>
    <property type="chains" value="A=1-181"/>
</dbReference>
<dbReference type="PDB" id="5BWM">
    <property type="method" value="X-ray"/>
    <property type="resolution" value="2.50 A"/>
    <property type="chains" value="A=1-179"/>
</dbReference>
<dbReference type="PDB" id="5C2K">
    <property type="method" value="X-ray"/>
    <property type="resolution" value="1.42 A"/>
    <property type="chains" value="A=1-193"/>
</dbReference>
<dbReference type="PDB" id="5C4M">
    <property type="method" value="X-ray"/>
    <property type="resolution" value="1.30 A"/>
    <property type="chains" value="A=1-193"/>
</dbReference>
<dbReference type="PDB" id="5EZ6">
    <property type="method" value="X-ray"/>
    <property type="resolution" value="1.80 A"/>
    <property type="chains" value="B=1-181"/>
</dbReference>
<dbReference type="PDB" id="5FR1">
    <property type="method" value="X-ray"/>
    <property type="resolution" value="2.75 A"/>
    <property type="chains" value="A=1-193"/>
</dbReference>
<dbReference type="PDB" id="5FR2">
    <property type="method" value="X-ray"/>
    <property type="resolution" value="3.35 A"/>
    <property type="chains" value="A=1-193"/>
</dbReference>
<dbReference type="PDB" id="5HPY">
    <property type="method" value="X-ray"/>
    <property type="resolution" value="2.40 A"/>
    <property type="chains" value="B/F=3-181"/>
</dbReference>
<dbReference type="PDB" id="5IRC">
    <property type="method" value="X-ray"/>
    <property type="resolution" value="1.72 A"/>
    <property type="chains" value="D/F=2-181"/>
</dbReference>
<dbReference type="PDB" id="5JCP">
    <property type="method" value="X-ray"/>
    <property type="resolution" value="2.10 A"/>
    <property type="chains" value="A/B=1-181"/>
</dbReference>
<dbReference type="PDB" id="5JHG">
    <property type="method" value="X-ray"/>
    <property type="resolution" value="2.50 A"/>
    <property type="chains" value="B/F=1-181"/>
</dbReference>
<dbReference type="PDB" id="5JHH">
    <property type="method" value="X-ray"/>
    <property type="resolution" value="2.30 A"/>
    <property type="chains" value="B/F=1-181"/>
</dbReference>
<dbReference type="PDB" id="5M6X">
    <property type="method" value="X-ray"/>
    <property type="resolution" value="2.40 A"/>
    <property type="chains" value="B/I=2-193"/>
</dbReference>
<dbReference type="PDB" id="5M70">
    <property type="method" value="X-ray"/>
    <property type="resolution" value="2.20 A"/>
    <property type="chains" value="B/G=2-193"/>
</dbReference>
<dbReference type="PDB" id="5ZHX">
    <property type="method" value="X-ray"/>
    <property type="resolution" value="3.50 A"/>
    <property type="chains" value="e/f/g/h=1-193"/>
</dbReference>
<dbReference type="PDB" id="6BC0">
    <property type="method" value="X-ray"/>
    <property type="resolution" value="2.20 A"/>
    <property type="chains" value="F=1-181"/>
</dbReference>
<dbReference type="PDB" id="6BCA">
    <property type="method" value="X-ray"/>
    <property type="resolution" value="2.00 A"/>
    <property type="chains" value="C/F=1-181"/>
</dbReference>
<dbReference type="PDB" id="6BCB">
    <property type="method" value="X-ray"/>
    <property type="resolution" value="1.40 A"/>
    <property type="chains" value="F=1-181"/>
</dbReference>
<dbReference type="PDB" id="6KX2">
    <property type="method" value="X-ray"/>
    <property type="resolution" value="1.45 A"/>
    <property type="chains" value="A=1-181"/>
</dbReference>
<dbReference type="PDB" id="6KX3">
    <property type="method" value="X-ray"/>
    <property type="resolution" value="1.98 A"/>
    <property type="chains" value="A=1-181"/>
</dbReference>
<dbReference type="PDB" id="6R3V">
    <property type="method" value="X-ray"/>
    <property type="resolution" value="1.75 A"/>
    <property type="chains" value="B=1-193"/>
</dbReference>
<dbReference type="PDB" id="6V6M">
    <property type="method" value="X-ray"/>
    <property type="resolution" value="1.39 A"/>
    <property type="chains" value="A=1-181"/>
</dbReference>
<dbReference type="PDB" id="6V6U">
    <property type="method" value="X-ray"/>
    <property type="resolution" value="1.16 A"/>
    <property type="chains" value="A=1-181"/>
</dbReference>
<dbReference type="PDB" id="6V6V">
    <property type="method" value="X-ray"/>
    <property type="resolution" value="1.40 A"/>
    <property type="chains" value="A=1-181"/>
</dbReference>
<dbReference type="PDB" id="7G80">
    <property type="method" value="X-ray"/>
    <property type="resolution" value="1.67 A"/>
    <property type="chains" value="A=1-184"/>
</dbReference>
<dbReference type="PDB" id="7G81">
    <property type="method" value="X-ray"/>
    <property type="resolution" value="1.51 A"/>
    <property type="chains" value="A=1-184"/>
</dbReference>
<dbReference type="PDB" id="7G82">
    <property type="method" value="X-ray"/>
    <property type="resolution" value="1.41 A"/>
    <property type="chains" value="A=1-184"/>
</dbReference>
<dbReference type="PDB" id="7G83">
    <property type="method" value="X-ray"/>
    <property type="resolution" value="1.31 A"/>
    <property type="chains" value="A=1-184"/>
</dbReference>
<dbReference type="PDB" id="7G84">
    <property type="method" value="X-ray"/>
    <property type="resolution" value="1.81 A"/>
    <property type="chains" value="A=1-184"/>
</dbReference>
<dbReference type="PDB" id="7G85">
    <property type="method" value="X-ray"/>
    <property type="resolution" value="1.74 A"/>
    <property type="chains" value="A=1-184"/>
</dbReference>
<dbReference type="PDB" id="7G86">
    <property type="method" value="X-ray"/>
    <property type="resolution" value="1.70 A"/>
    <property type="chains" value="A=1-184"/>
</dbReference>
<dbReference type="PDB" id="7G87">
    <property type="method" value="X-ray"/>
    <property type="resolution" value="2.05 A"/>
    <property type="chains" value="A=1-184"/>
</dbReference>
<dbReference type="PDB" id="7G88">
    <property type="method" value="X-ray"/>
    <property type="resolution" value="1.87 A"/>
    <property type="chains" value="A=1-184"/>
</dbReference>
<dbReference type="PDB" id="7G89">
    <property type="method" value="X-ray"/>
    <property type="resolution" value="1.90 A"/>
    <property type="chains" value="A=1-184"/>
</dbReference>
<dbReference type="PDB" id="7G8A">
    <property type="method" value="X-ray"/>
    <property type="resolution" value="1.50 A"/>
    <property type="chains" value="A=1-184"/>
</dbReference>
<dbReference type="PDB" id="7G8B">
    <property type="method" value="X-ray"/>
    <property type="resolution" value="1.42 A"/>
    <property type="chains" value="A=1-184"/>
</dbReference>
<dbReference type="PDB" id="7G8C">
    <property type="method" value="X-ray"/>
    <property type="resolution" value="2.18 A"/>
    <property type="chains" value="A=1-184"/>
</dbReference>
<dbReference type="PDB" id="7G8D">
    <property type="method" value="X-ray"/>
    <property type="resolution" value="1.94 A"/>
    <property type="chains" value="A=1-184"/>
</dbReference>
<dbReference type="PDB" id="7G8E">
    <property type="method" value="X-ray"/>
    <property type="resolution" value="1.79 A"/>
    <property type="chains" value="A=1-184"/>
</dbReference>
<dbReference type="PDB" id="7G8F">
    <property type="method" value="X-ray"/>
    <property type="resolution" value="1.42 A"/>
    <property type="chains" value="A=1-184"/>
</dbReference>
<dbReference type="PDB" id="7G8G">
    <property type="method" value="X-ray"/>
    <property type="resolution" value="1.92 A"/>
    <property type="chains" value="A=1-184"/>
</dbReference>
<dbReference type="PDB" id="7G8H">
    <property type="method" value="X-ray"/>
    <property type="resolution" value="1.67 A"/>
    <property type="chains" value="A=1-184"/>
</dbReference>
<dbReference type="PDB" id="7G8I">
    <property type="method" value="X-ray"/>
    <property type="resolution" value="2.47 A"/>
    <property type="chains" value="A=1-184"/>
</dbReference>
<dbReference type="PDB" id="7G8J">
    <property type="method" value="X-ray"/>
    <property type="resolution" value="1.99 A"/>
    <property type="chains" value="A=1-184"/>
</dbReference>
<dbReference type="PDB" id="7G8K">
    <property type="method" value="X-ray"/>
    <property type="resolution" value="1.49 A"/>
    <property type="chains" value="A=1-184"/>
</dbReference>
<dbReference type="PDB" id="7G8L">
    <property type="method" value="X-ray"/>
    <property type="resolution" value="1.60 A"/>
    <property type="chains" value="A=1-184"/>
</dbReference>
<dbReference type="PDB" id="7G8M">
    <property type="method" value="X-ray"/>
    <property type="resolution" value="2.03 A"/>
    <property type="chains" value="A=1-184"/>
</dbReference>
<dbReference type="PDB" id="7G8N">
    <property type="method" value="X-ray"/>
    <property type="resolution" value="2.32 A"/>
    <property type="chains" value="A=1-184"/>
</dbReference>
<dbReference type="PDB" id="7G8O">
    <property type="method" value="X-ray"/>
    <property type="resolution" value="1.58 A"/>
    <property type="chains" value="A=1-184"/>
</dbReference>
<dbReference type="PDB" id="7G8P">
    <property type="method" value="X-ray"/>
    <property type="resolution" value="2.21 A"/>
    <property type="chains" value="A=1-184"/>
</dbReference>
<dbReference type="PDB" id="7G8Q">
    <property type="method" value="X-ray"/>
    <property type="resolution" value="1.56 A"/>
    <property type="chains" value="A=1-184"/>
</dbReference>
<dbReference type="PDB" id="7G8R">
    <property type="method" value="X-ray"/>
    <property type="resolution" value="1.44 A"/>
    <property type="chains" value="A=1-184"/>
</dbReference>
<dbReference type="PDB" id="7G8S">
    <property type="method" value="X-ray"/>
    <property type="resolution" value="1.60 A"/>
    <property type="chains" value="A=1-184"/>
</dbReference>
<dbReference type="PDB" id="7G8T">
    <property type="method" value="X-ray"/>
    <property type="resolution" value="1.39 A"/>
    <property type="chains" value="A=1-184"/>
</dbReference>
<dbReference type="PDB" id="7G8U">
    <property type="method" value="X-ray"/>
    <property type="resolution" value="2.44 A"/>
    <property type="chains" value="A=1-184"/>
</dbReference>
<dbReference type="PDB" id="7G8V">
    <property type="method" value="X-ray"/>
    <property type="resolution" value="1.45 A"/>
    <property type="chains" value="A=1-184"/>
</dbReference>
<dbReference type="PDB" id="7G8W">
    <property type="method" value="X-ray"/>
    <property type="resolution" value="1.94 A"/>
    <property type="chains" value="A=1-184"/>
</dbReference>
<dbReference type="PDB" id="7G8X">
    <property type="method" value="X-ray"/>
    <property type="resolution" value="1.71 A"/>
    <property type="chains" value="A=1-184"/>
</dbReference>
<dbReference type="PDB" id="7G8Y">
    <property type="method" value="X-ray"/>
    <property type="resolution" value="1.75 A"/>
    <property type="chains" value="A=1-184"/>
</dbReference>
<dbReference type="PDB" id="7G8Z">
    <property type="method" value="X-ray"/>
    <property type="resolution" value="1.51 A"/>
    <property type="chains" value="A=1-184"/>
</dbReference>
<dbReference type="PDB" id="7G90">
    <property type="method" value="X-ray"/>
    <property type="resolution" value="1.91 A"/>
    <property type="chains" value="A=1-184"/>
</dbReference>
<dbReference type="PDB" id="7G91">
    <property type="method" value="X-ray"/>
    <property type="resolution" value="2.29 A"/>
    <property type="chains" value="A=1-184"/>
</dbReference>
<dbReference type="PDB" id="7G92">
    <property type="method" value="X-ray"/>
    <property type="resolution" value="1.87 A"/>
    <property type="chains" value="A=1-184"/>
</dbReference>
<dbReference type="PDB" id="7G93">
    <property type="method" value="X-ray"/>
    <property type="resolution" value="1.69 A"/>
    <property type="chains" value="A=1-184"/>
</dbReference>
<dbReference type="PDB" id="7G94">
    <property type="method" value="X-ray"/>
    <property type="resolution" value="1.47 A"/>
    <property type="chains" value="A=1-184"/>
</dbReference>
<dbReference type="PDB" id="7G95">
    <property type="method" value="X-ray"/>
    <property type="resolution" value="1.55 A"/>
    <property type="chains" value="A=1-184"/>
</dbReference>
<dbReference type="PDB" id="7G96">
    <property type="method" value="X-ray"/>
    <property type="resolution" value="2.30 A"/>
    <property type="chains" value="A=1-184"/>
</dbReference>
<dbReference type="PDB" id="7G97">
    <property type="method" value="X-ray"/>
    <property type="resolution" value="2.30 A"/>
    <property type="chains" value="A=1-184"/>
</dbReference>
<dbReference type="PDB" id="7G98">
    <property type="method" value="X-ray"/>
    <property type="resolution" value="2.88 A"/>
    <property type="chains" value="A=1-184"/>
</dbReference>
<dbReference type="PDB" id="7G99">
    <property type="method" value="X-ray"/>
    <property type="resolution" value="1.78 A"/>
    <property type="chains" value="A=1-184"/>
</dbReference>
<dbReference type="PDB" id="7G9A">
    <property type="method" value="X-ray"/>
    <property type="resolution" value="2.58 A"/>
    <property type="chains" value="A=1-184"/>
</dbReference>
<dbReference type="PDB" id="7G9B">
    <property type="method" value="X-ray"/>
    <property type="resolution" value="2.55 A"/>
    <property type="chains" value="A=1-184"/>
</dbReference>
<dbReference type="PDB" id="7G9C">
    <property type="method" value="X-ray"/>
    <property type="resolution" value="2.69 A"/>
    <property type="chains" value="A=1-184"/>
</dbReference>
<dbReference type="PDB" id="7G9D">
    <property type="method" value="X-ray"/>
    <property type="resolution" value="2.66 A"/>
    <property type="chains" value="A=1-184"/>
</dbReference>
<dbReference type="PDB" id="7G9E">
    <property type="method" value="X-ray"/>
    <property type="resolution" value="2.15 A"/>
    <property type="chains" value="A=1-184"/>
</dbReference>
<dbReference type="PDB" id="7G9F">
    <property type="method" value="X-ray"/>
    <property type="resolution" value="1.94 A"/>
    <property type="chains" value="A=1-184"/>
</dbReference>
<dbReference type="PDB" id="7G9G">
    <property type="method" value="X-ray"/>
    <property type="resolution" value="2.08 A"/>
    <property type="chains" value="A=1-184"/>
</dbReference>
<dbReference type="PDB" id="7G9H">
    <property type="method" value="X-ray"/>
    <property type="resolution" value="2.75 A"/>
    <property type="chains" value="A=1-184"/>
</dbReference>
<dbReference type="PDB" id="7G9I">
    <property type="method" value="X-ray"/>
    <property type="resolution" value="2.20 A"/>
    <property type="chains" value="A=1-184"/>
</dbReference>
<dbReference type="PDB" id="7G9J">
    <property type="method" value="X-ray"/>
    <property type="resolution" value="1.97 A"/>
    <property type="chains" value="A=1-184"/>
</dbReference>
<dbReference type="PDB" id="7QSC">
    <property type="method" value="X-ray"/>
    <property type="resolution" value="1.91 A"/>
    <property type="chains" value="B/D=2-193"/>
</dbReference>
<dbReference type="PDB" id="7QTM">
    <property type="method" value="X-ray"/>
    <property type="resolution" value="2.25 A"/>
    <property type="chains" value="B/I=2-193"/>
</dbReference>
<dbReference type="PDB" id="7WZA">
    <property type="method" value="X-ray"/>
    <property type="resolution" value="1.50 A"/>
    <property type="chains" value="A=1-181"/>
</dbReference>
<dbReference type="PDB" id="7WZC">
    <property type="method" value="X-ray"/>
    <property type="resolution" value="1.80 A"/>
    <property type="chains" value="A=1-181"/>
</dbReference>
<dbReference type="PDB" id="8BNT">
    <property type="method" value="X-ray"/>
    <property type="resolution" value="1.40 A"/>
    <property type="chains" value="A=1-184"/>
</dbReference>
<dbReference type="PDB" id="8FC7">
    <property type="method" value="EM"/>
    <property type="resolution" value="3.30 A"/>
    <property type="chains" value="E/F/G/H=1-193"/>
</dbReference>
<dbReference type="PDB" id="8FC9">
    <property type="method" value="EM"/>
    <property type="resolution" value="3.75 A"/>
    <property type="chains" value="E/F/G/H=1-193"/>
</dbReference>
<dbReference type="PDB" id="8FCB">
    <property type="method" value="EM"/>
    <property type="resolution" value="3.52 A"/>
    <property type="chains" value="E/F/G/H=1-193"/>
</dbReference>
<dbReference type="PDB" id="8FPW">
    <property type="method" value="X-ray"/>
    <property type="resolution" value="1.40 A"/>
    <property type="chains" value="A=1-181"/>
</dbReference>
<dbReference type="PDB" id="8FPX">
    <property type="method" value="X-ray"/>
    <property type="resolution" value="1.47 A"/>
    <property type="chains" value="A=1-181"/>
</dbReference>
<dbReference type="PDB" id="8GI3">
    <property type="method" value="X-ray"/>
    <property type="resolution" value="1.52 A"/>
    <property type="chains" value="A=1-193"/>
</dbReference>
<dbReference type="PDB" id="8GI6">
    <property type="method" value="X-ray"/>
    <property type="resolution" value="1.40 A"/>
    <property type="chains" value="A=1-193"/>
</dbReference>
<dbReference type="PDB" id="8JVJ">
    <property type="method" value="EM"/>
    <property type="resolution" value="3.44 A"/>
    <property type="chains" value="E/F/G/H=1-193"/>
</dbReference>
<dbReference type="PDB" id="8T1C">
    <property type="method" value="EM"/>
    <property type="resolution" value="3.49 A"/>
    <property type="chains" value="E=1-193"/>
</dbReference>
<dbReference type="PDB" id="9AX5">
    <property type="method" value="EM"/>
    <property type="resolution" value="3.30 A"/>
    <property type="chains" value="C=2-193"/>
</dbReference>
<dbReference type="PDBsum" id="1A2B"/>
<dbReference type="PDBsum" id="1CC0"/>
<dbReference type="PDBsum" id="1CXZ"/>
<dbReference type="PDBsum" id="1DPF"/>
<dbReference type="PDBsum" id="1FTN"/>
<dbReference type="PDBsum" id="1KMQ"/>
<dbReference type="PDBsum" id="1LB1"/>
<dbReference type="PDBsum" id="1OW3"/>
<dbReference type="PDBsum" id="1S1C"/>
<dbReference type="PDBsum" id="1TX4"/>
<dbReference type="PDBsum" id="1X86"/>
<dbReference type="PDBsum" id="1XCG"/>
<dbReference type="PDBsum" id="2RGN"/>
<dbReference type="PDBsum" id="3KZ1"/>
<dbReference type="PDBsum" id="3LW8"/>
<dbReference type="PDBsum" id="3LWN"/>
<dbReference type="PDBsum" id="3LXR"/>
<dbReference type="PDBsum" id="3MSX"/>
<dbReference type="PDBsum" id="3T06"/>
<dbReference type="PDBsum" id="4D0N"/>
<dbReference type="PDBsum" id="4XH9"/>
<dbReference type="PDBsum" id="4XOI"/>
<dbReference type="PDBsum" id="4XSG"/>
<dbReference type="PDBsum" id="4XSH"/>
<dbReference type="PDBsum" id="5A0F"/>
<dbReference type="PDBsum" id="5BWM"/>
<dbReference type="PDBsum" id="5C2K"/>
<dbReference type="PDBsum" id="5C4M"/>
<dbReference type="PDBsum" id="5EZ6"/>
<dbReference type="PDBsum" id="5FR1"/>
<dbReference type="PDBsum" id="5FR2"/>
<dbReference type="PDBsum" id="5HPY"/>
<dbReference type="PDBsum" id="5IRC"/>
<dbReference type="PDBsum" id="5JCP"/>
<dbReference type="PDBsum" id="5JHG"/>
<dbReference type="PDBsum" id="5JHH"/>
<dbReference type="PDBsum" id="5M6X"/>
<dbReference type="PDBsum" id="5M70"/>
<dbReference type="PDBsum" id="5ZHX"/>
<dbReference type="PDBsum" id="6BC0"/>
<dbReference type="PDBsum" id="6BCA"/>
<dbReference type="PDBsum" id="6BCB"/>
<dbReference type="PDBsum" id="6KX2"/>
<dbReference type="PDBsum" id="6KX3"/>
<dbReference type="PDBsum" id="6R3V"/>
<dbReference type="PDBsum" id="6V6M"/>
<dbReference type="PDBsum" id="6V6U"/>
<dbReference type="PDBsum" id="6V6V"/>
<dbReference type="PDBsum" id="7G80"/>
<dbReference type="PDBsum" id="7G81"/>
<dbReference type="PDBsum" id="7G82"/>
<dbReference type="PDBsum" id="7G83"/>
<dbReference type="PDBsum" id="7G84"/>
<dbReference type="PDBsum" id="7G85"/>
<dbReference type="PDBsum" id="7G86"/>
<dbReference type="PDBsum" id="7G87"/>
<dbReference type="PDBsum" id="7G88"/>
<dbReference type="PDBsum" id="7G89"/>
<dbReference type="PDBsum" id="7G8A"/>
<dbReference type="PDBsum" id="7G8B"/>
<dbReference type="PDBsum" id="7G8C"/>
<dbReference type="PDBsum" id="7G8D"/>
<dbReference type="PDBsum" id="7G8E"/>
<dbReference type="PDBsum" id="7G8F"/>
<dbReference type="PDBsum" id="7G8G"/>
<dbReference type="PDBsum" id="7G8H"/>
<dbReference type="PDBsum" id="7G8I"/>
<dbReference type="PDBsum" id="7G8J"/>
<dbReference type="PDBsum" id="7G8K"/>
<dbReference type="PDBsum" id="7G8L"/>
<dbReference type="PDBsum" id="7G8M"/>
<dbReference type="PDBsum" id="7G8N"/>
<dbReference type="PDBsum" id="7G8O"/>
<dbReference type="PDBsum" id="7G8P"/>
<dbReference type="PDBsum" id="7G8Q"/>
<dbReference type="PDBsum" id="7G8R"/>
<dbReference type="PDBsum" id="7G8S"/>
<dbReference type="PDBsum" id="7G8T"/>
<dbReference type="PDBsum" id="7G8U"/>
<dbReference type="PDBsum" id="7G8V"/>
<dbReference type="PDBsum" id="7G8W"/>
<dbReference type="PDBsum" id="7G8X"/>
<dbReference type="PDBsum" id="7G8Y"/>
<dbReference type="PDBsum" id="7G8Z"/>
<dbReference type="PDBsum" id="7G90"/>
<dbReference type="PDBsum" id="7G91"/>
<dbReference type="PDBsum" id="7G92"/>
<dbReference type="PDBsum" id="7G93"/>
<dbReference type="PDBsum" id="7G94"/>
<dbReference type="PDBsum" id="7G95"/>
<dbReference type="PDBsum" id="7G96"/>
<dbReference type="PDBsum" id="7G97"/>
<dbReference type="PDBsum" id="7G98"/>
<dbReference type="PDBsum" id="7G99"/>
<dbReference type="PDBsum" id="7G9A"/>
<dbReference type="PDBsum" id="7G9B"/>
<dbReference type="PDBsum" id="7G9C"/>
<dbReference type="PDBsum" id="7G9D"/>
<dbReference type="PDBsum" id="7G9E"/>
<dbReference type="PDBsum" id="7G9F"/>
<dbReference type="PDBsum" id="7G9G"/>
<dbReference type="PDBsum" id="7G9H"/>
<dbReference type="PDBsum" id="7G9I"/>
<dbReference type="PDBsum" id="7G9J"/>
<dbReference type="PDBsum" id="7QSC"/>
<dbReference type="PDBsum" id="7QTM"/>
<dbReference type="PDBsum" id="7WZA"/>
<dbReference type="PDBsum" id="7WZC"/>
<dbReference type="PDBsum" id="8BNT"/>
<dbReference type="PDBsum" id="8FC7"/>
<dbReference type="PDBsum" id="8FC9"/>
<dbReference type="PDBsum" id="8FCB"/>
<dbReference type="PDBsum" id="8FPW"/>
<dbReference type="PDBsum" id="8FPX"/>
<dbReference type="PDBsum" id="8GI3"/>
<dbReference type="PDBsum" id="8GI6"/>
<dbReference type="PDBsum" id="8JVJ"/>
<dbReference type="PDBsum" id="8T1C"/>
<dbReference type="PDBsum" id="9AX5"/>
<dbReference type="BMRB" id="P61586"/>
<dbReference type="EMDB" id="EMD-28975"/>
<dbReference type="EMDB" id="EMD-28977"/>
<dbReference type="EMDB" id="EMD-36676"/>
<dbReference type="EMDB" id="EMD-40959"/>
<dbReference type="EMDB" id="EMD-43927"/>
<dbReference type="SMR" id="P61586"/>
<dbReference type="BioGRID" id="106880">
    <property type="interactions" value="1256"/>
</dbReference>
<dbReference type="CORUM" id="P61586"/>
<dbReference type="DIP" id="DIP-29642N"/>
<dbReference type="FunCoup" id="P61586">
    <property type="interactions" value="3124"/>
</dbReference>
<dbReference type="IntAct" id="P61586">
    <property type="interactions" value="250"/>
</dbReference>
<dbReference type="MINT" id="P61586"/>
<dbReference type="STRING" id="9606.ENSP00000400175"/>
<dbReference type="BindingDB" id="P61586"/>
<dbReference type="ChEMBL" id="CHEMBL6052"/>
<dbReference type="DrugBank" id="DB04315">
    <property type="generic name" value="Guanosine-5'-Diphosphate"/>
</dbReference>
<dbReference type="TCDB" id="8.A.92.1.19">
    <property type="family name" value="the g-protein AlphaBetaGama complex (gpc) family"/>
</dbReference>
<dbReference type="GlyCosmos" id="P61586">
    <property type="glycosylation" value="2 sites, No reported glycans"/>
</dbReference>
<dbReference type="GlyGen" id="P61586">
    <property type="glycosylation" value="4 sites, 1 O-linked glycan (1 site)"/>
</dbReference>
<dbReference type="iPTMnet" id="P61586"/>
<dbReference type="MetOSite" id="P61586"/>
<dbReference type="PhosphoSitePlus" id="P61586"/>
<dbReference type="SwissPalm" id="P61586"/>
<dbReference type="BioMuta" id="RHOA"/>
<dbReference type="DMDM" id="47606458"/>
<dbReference type="jPOST" id="P61586"/>
<dbReference type="MassIVE" id="P61586"/>
<dbReference type="PaxDb" id="9606-ENSP00000400175"/>
<dbReference type="PeptideAtlas" id="P61586"/>
<dbReference type="ProteomicsDB" id="57321"/>
<dbReference type="Pumba" id="P61586"/>
<dbReference type="TopDownProteomics" id="P61586"/>
<dbReference type="ABCD" id="P61586">
    <property type="antibodies" value="17 sequenced antibodies"/>
</dbReference>
<dbReference type="Antibodypedia" id="30508">
    <property type="antibodies" value="726 antibodies from 40 providers"/>
</dbReference>
<dbReference type="DNASU" id="387"/>
<dbReference type="Ensembl" id="ENST00000418115.6">
    <property type="protein sequence ID" value="ENSP00000400175.1"/>
    <property type="gene ID" value="ENSG00000067560.14"/>
</dbReference>
<dbReference type="Ensembl" id="ENST00000445425.6">
    <property type="protein sequence ID" value="ENSP00000408402.3"/>
    <property type="gene ID" value="ENSG00000067560.14"/>
</dbReference>
<dbReference type="Ensembl" id="ENST00000678200.1">
    <property type="protein sequence ID" value="ENSP00000504180.1"/>
    <property type="gene ID" value="ENSG00000067560.14"/>
</dbReference>
<dbReference type="Ensembl" id="ENST00000679208.1">
    <property type="protein sequence ID" value="ENSP00000503282.1"/>
    <property type="gene ID" value="ENSG00000067560.14"/>
</dbReference>
<dbReference type="GeneID" id="387"/>
<dbReference type="KEGG" id="hsa:387"/>
<dbReference type="MANE-Select" id="ENST00000418115.6">
    <property type="protein sequence ID" value="ENSP00000400175.1"/>
    <property type="RefSeq nucleotide sequence ID" value="NM_001664.4"/>
    <property type="RefSeq protein sequence ID" value="NP_001655.1"/>
</dbReference>
<dbReference type="UCSC" id="uc003cwu.4">
    <property type="organism name" value="human"/>
</dbReference>
<dbReference type="AGR" id="HGNC:667"/>
<dbReference type="CTD" id="387"/>
<dbReference type="DisGeNET" id="387"/>
<dbReference type="GeneCards" id="RHOA"/>
<dbReference type="HGNC" id="HGNC:667">
    <property type="gene designation" value="RHOA"/>
</dbReference>
<dbReference type="HPA" id="ENSG00000067560">
    <property type="expression patterns" value="Low tissue specificity"/>
</dbReference>
<dbReference type="MalaCards" id="RHOA"/>
<dbReference type="MIM" id="165390">
    <property type="type" value="gene"/>
</dbReference>
<dbReference type="MIM" id="618727">
    <property type="type" value="phenotype"/>
</dbReference>
<dbReference type="neXtProt" id="NX_P61586"/>
<dbReference type="OpenTargets" id="ENSG00000067560"/>
<dbReference type="Orphanet" id="589608">
    <property type="disease" value="Linear hypopigmentation and craniofacial asymmetry with acral, ocular and brain anomalies"/>
</dbReference>
<dbReference type="PharmGKB" id="PA134865095"/>
<dbReference type="VEuPathDB" id="HostDB:ENSG00000067560"/>
<dbReference type="eggNOG" id="KOG0393">
    <property type="taxonomic scope" value="Eukaryota"/>
</dbReference>
<dbReference type="GeneTree" id="ENSGT00950000182945"/>
<dbReference type="HOGENOM" id="CLU_041217_21_2_1"/>
<dbReference type="InParanoid" id="P61586"/>
<dbReference type="OMA" id="EVNHYIP"/>
<dbReference type="OrthoDB" id="8830751at2759"/>
<dbReference type="PAN-GO" id="P61586">
    <property type="GO annotations" value="14 GO annotations based on evolutionary models"/>
</dbReference>
<dbReference type="PhylomeDB" id="P61586"/>
<dbReference type="TreeFam" id="TF300837"/>
<dbReference type="BRENDA" id="3.6.5.2">
    <property type="organism ID" value="2681"/>
</dbReference>
<dbReference type="PathwayCommons" id="P61586"/>
<dbReference type="Reactome" id="R-HSA-114604">
    <property type="pathway name" value="GPVI-mediated activation cascade"/>
</dbReference>
<dbReference type="Reactome" id="R-HSA-193634">
    <property type="pathway name" value="Axonal growth inhibition (RHOA activation)"/>
</dbReference>
<dbReference type="Reactome" id="R-HSA-198203">
    <property type="pathway name" value="PI3K/AKT activation"/>
</dbReference>
<dbReference type="Reactome" id="R-HSA-209563">
    <property type="pathway name" value="Axonal growth stimulation"/>
</dbReference>
<dbReference type="Reactome" id="R-HSA-2173791">
    <property type="pathway name" value="TGF-beta receptor signaling in EMT (epithelial to mesenchymal transition)"/>
</dbReference>
<dbReference type="Reactome" id="R-HSA-392451">
    <property type="pathway name" value="G beta:gamma signalling through PI3Kgamma"/>
</dbReference>
<dbReference type="Reactome" id="R-HSA-3928662">
    <property type="pathway name" value="EPHB-mediated forward signaling"/>
</dbReference>
<dbReference type="Reactome" id="R-HSA-3928663">
    <property type="pathway name" value="EPHA-mediated growth cone collapse"/>
</dbReference>
<dbReference type="Reactome" id="R-HSA-4086400">
    <property type="pathway name" value="PCP/CE pathway"/>
</dbReference>
<dbReference type="Reactome" id="R-HSA-416482">
    <property type="pathway name" value="G alpha (12/13) signalling events"/>
</dbReference>
<dbReference type="Reactome" id="R-HSA-416550">
    <property type="pathway name" value="Sema4D mediated inhibition of cell attachment and migration"/>
</dbReference>
<dbReference type="Reactome" id="R-HSA-416572">
    <property type="pathway name" value="Sema4D induced cell migration and growth-cone collapse"/>
</dbReference>
<dbReference type="Reactome" id="R-HSA-4420097">
    <property type="pathway name" value="VEGFA-VEGFR2 Pathway"/>
</dbReference>
<dbReference type="Reactome" id="R-HSA-5625740">
    <property type="pathway name" value="RHO GTPases activate PKNs"/>
</dbReference>
<dbReference type="Reactome" id="R-HSA-5625900">
    <property type="pathway name" value="RHO GTPases activate CIT"/>
</dbReference>
<dbReference type="Reactome" id="R-HSA-5625970">
    <property type="pathway name" value="RHO GTPases activate KTN1"/>
</dbReference>
<dbReference type="Reactome" id="R-HSA-5627117">
    <property type="pathway name" value="RHO GTPases Activate ROCKs"/>
</dbReference>
<dbReference type="Reactome" id="R-HSA-5663220">
    <property type="pathway name" value="RHO GTPases Activate Formins"/>
</dbReference>
<dbReference type="Reactome" id="R-HSA-5666185">
    <property type="pathway name" value="RHO GTPases Activate Rhotekin and Rhophilins"/>
</dbReference>
<dbReference type="Reactome" id="R-HSA-5689896">
    <property type="pathway name" value="Ovarian tumor domain proteases"/>
</dbReference>
<dbReference type="Reactome" id="R-HSA-6785631">
    <property type="pathway name" value="ERBB2 Regulates Cell Motility"/>
</dbReference>
<dbReference type="Reactome" id="R-HSA-6798695">
    <property type="pathway name" value="Neutrophil degranulation"/>
</dbReference>
<dbReference type="Reactome" id="R-HSA-8849471">
    <property type="pathway name" value="PTK6 Regulates RHO GTPases, RAS GTPase and MAP kinases"/>
</dbReference>
<dbReference type="Reactome" id="R-HSA-8980692">
    <property type="pathway name" value="RHOA GTPase cycle"/>
</dbReference>
<dbReference type="Reactome" id="R-HSA-8985586">
    <property type="pathway name" value="SLIT2:ROBO1 increases RHOA activity"/>
</dbReference>
<dbReference type="Reactome" id="R-HSA-9013106">
    <property type="pathway name" value="RHOC GTPase cycle"/>
</dbReference>
<dbReference type="SABIO-RK" id="P61586"/>
<dbReference type="SignaLink" id="P61586"/>
<dbReference type="SIGNOR" id="P61586"/>
<dbReference type="BioGRID-ORCS" id="387">
    <property type="hits" value="284 hits in 1194 CRISPR screens"/>
</dbReference>
<dbReference type="CD-CODE" id="DEE660B4">
    <property type="entry name" value="Stress granule"/>
</dbReference>
<dbReference type="CD-CODE" id="FB4E32DD">
    <property type="entry name" value="Presynaptic clusters and postsynaptic densities"/>
</dbReference>
<dbReference type="ChiTaRS" id="RHOA">
    <property type="organism name" value="human"/>
</dbReference>
<dbReference type="EvolutionaryTrace" id="P61586"/>
<dbReference type="GeneWiki" id="RHOA"/>
<dbReference type="GenomeRNAi" id="387"/>
<dbReference type="Pharos" id="P61586">
    <property type="development level" value="Tbio"/>
</dbReference>
<dbReference type="PRO" id="PR:P61586"/>
<dbReference type="Proteomes" id="UP000005640">
    <property type="component" value="Chromosome 3"/>
</dbReference>
<dbReference type="RNAct" id="P61586">
    <property type="molecule type" value="protein"/>
</dbReference>
<dbReference type="Bgee" id="ENSG00000067560">
    <property type="expression patterns" value="Expressed in monocyte and 214 other cell types or tissues"/>
</dbReference>
<dbReference type="ExpressionAtlas" id="P61586">
    <property type="expression patterns" value="baseline and differential"/>
</dbReference>
<dbReference type="GO" id="GO:0043296">
    <property type="term" value="C:apical junction complex"/>
    <property type="evidence" value="ECO:0000314"/>
    <property type="project" value="UniProtKB"/>
</dbReference>
<dbReference type="GO" id="GO:0005938">
    <property type="term" value="C:cell cortex"/>
    <property type="evidence" value="ECO:0000314"/>
    <property type="project" value="UniProtKB"/>
</dbReference>
<dbReference type="GO" id="GO:0030054">
    <property type="term" value="C:cell junction"/>
    <property type="evidence" value="ECO:0000304"/>
    <property type="project" value="Reactome"/>
</dbReference>
<dbReference type="GO" id="GO:0071944">
    <property type="term" value="C:cell periphery"/>
    <property type="evidence" value="ECO:0000315"/>
    <property type="project" value="UniProtKB"/>
</dbReference>
<dbReference type="GO" id="GO:0032154">
    <property type="term" value="C:cleavage furrow"/>
    <property type="evidence" value="ECO:0007669"/>
    <property type="project" value="UniProtKB-SubCell"/>
</dbReference>
<dbReference type="GO" id="GO:0009898">
    <property type="term" value="C:cytoplasmic side of plasma membrane"/>
    <property type="evidence" value="ECO:0000314"/>
    <property type="project" value="UniProtKB"/>
</dbReference>
<dbReference type="GO" id="GO:0005856">
    <property type="term" value="C:cytoskeleton"/>
    <property type="evidence" value="ECO:0007669"/>
    <property type="project" value="UniProtKB-SubCell"/>
</dbReference>
<dbReference type="GO" id="GO:0005829">
    <property type="term" value="C:cytosol"/>
    <property type="evidence" value="ECO:0000314"/>
    <property type="project" value="UniProtKB"/>
</dbReference>
<dbReference type="GO" id="GO:0043197">
    <property type="term" value="C:dendritic spine"/>
    <property type="evidence" value="ECO:0000318"/>
    <property type="project" value="GO_Central"/>
</dbReference>
<dbReference type="GO" id="GO:0005789">
    <property type="term" value="C:endoplasmic reticulum membrane"/>
    <property type="evidence" value="ECO:0000304"/>
    <property type="project" value="Reactome"/>
</dbReference>
<dbReference type="GO" id="GO:0005768">
    <property type="term" value="C:endosome"/>
    <property type="evidence" value="ECO:0000315"/>
    <property type="project" value="AgBase"/>
</dbReference>
<dbReference type="GO" id="GO:0070062">
    <property type="term" value="C:extracellular exosome"/>
    <property type="evidence" value="ECO:0007005"/>
    <property type="project" value="UniProtKB"/>
</dbReference>
<dbReference type="GO" id="GO:0101003">
    <property type="term" value="C:ficolin-1-rich granule membrane"/>
    <property type="evidence" value="ECO:0000304"/>
    <property type="project" value="Reactome"/>
</dbReference>
<dbReference type="GO" id="GO:0005925">
    <property type="term" value="C:focal adhesion"/>
    <property type="evidence" value="ECO:0007005"/>
    <property type="project" value="UniProtKB"/>
</dbReference>
<dbReference type="GO" id="GO:0098978">
    <property type="term" value="C:glutamatergic synapse"/>
    <property type="evidence" value="ECO:0000314"/>
    <property type="project" value="SynGO"/>
</dbReference>
<dbReference type="GO" id="GO:0030027">
    <property type="term" value="C:lamellipodium"/>
    <property type="evidence" value="ECO:0000250"/>
    <property type="project" value="UniProtKB"/>
</dbReference>
<dbReference type="GO" id="GO:0030496">
    <property type="term" value="C:midbody"/>
    <property type="evidence" value="ECO:0007669"/>
    <property type="project" value="UniProtKB-SubCell"/>
</dbReference>
<dbReference type="GO" id="GO:0005634">
    <property type="term" value="C:nucleus"/>
    <property type="evidence" value="ECO:0007669"/>
    <property type="project" value="UniProtKB-SubCell"/>
</dbReference>
<dbReference type="GO" id="GO:0005886">
    <property type="term" value="C:plasma membrane"/>
    <property type="evidence" value="ECO:0000318"/>
    <property type="project" value="GO_Central"/>
</dbReference>
<dbReference type="GO" id="GO:0098794">
    <property type="term" value="C:postsynapse"/>
    <property type="evidence" value="ECO:0000314"/>
    <property type="project" value="SynGO"/>
</dbReference>
<dbReference type="GO" id="GO:0032587">
    <property type="term" value="C:ruffle membrane"/>
    <property type="evidence" value="ECO:0007669"/>
    <property type="project" value="Ensembl"/>
</dbReference>
<dbReference type="GO" id="GO:0030667">
    <property type="term" value="C:secretory granule membrane"/>
    <property type="evidence" value="ECO:0000304"/>
    <property type="project" value="Reactome"/>
</dbReference>
<dbReference type="GO" id="GO:0031982">
    <property type="term" value="C:vesicle"/>
    <property type="evidence" value="ECO:0000314"/>
    <property type="project" value="AgBase"/>
</dbReference>
<dbReference type="GO" id="GO:0003925">
    <property type="term" value="F:G protein activity"/>
    <property type="evidence" value="ECO:0000314"/>
    <property type="project" value="UniProtKB"/>
</dbReference>
<dbReference type="GO" id="GO:0005525">
    <property type="term" value="F:GTP binding"/>
    <property type="evidence" value="ECO:0000314"/>
    <property type="project" value="UniProtKB"/>
</dbReference>
<dbReference type="GO" id="GO:0003924">
    <property type="term" value="F:GTPase activity"/>
    <property type="evidence" value="ECO:0000314"/>
    <property type="project" value="UniProtKB"/>
</dbReference>
<dbReference type="GO" id="GO:0017022">
    <property type="term" value="F:myosin binding"/>
    <property type="evidence" value="ECO:0000353"/>
    <property type="project" value="UniProtKB"/>
</dbReference>
<dbReference type="GO" id="GO:0019901">
    <property type="term" value="F:protein kinase binding"/>
    <property type="evidence" value="ECO:0000318"/>
    <property type="project" value="GO_Central"/>
</dbReference>
<dbReference type="GO" id="GO:0030036">
    <property type="term" value="P:actin cytoskeleton organization"/>
    <property type="evidence" value="ECO:0000315"/>
    <property type="project" value="UniProtKB"/>
</dbReference>
<dbReference type="GO" id="GO:0002363">
    <property type="term" value="P:alpha-beta T cell lineage commitment"/>
    <property type="evidence" value="ECO:0007669"/>
    <property type="project" value="Ensembl"/>
</dbReference>
<dbReference type="GO" id="GO:0030521">
    <property type="term" value="P:androgen receptor signaling pathway"/>
    <property type="evidence" value="ECO:0007669"/>
    <property type="project" value="Ensembl"/>
</dbReference>
<dbReference type="GO" id="GO:0001998">
    <property type="term" value="P:angiotensin-mediated vasoconstriction involved in regulation of systemic arterial blood pressure"/>
    <property type="evidence" value="ECO:0007669"/>
    <property type="project" value="Ensembl"/>
</dbReference>
<dbReference type="GO" id="GO:0003189">
    <property type="term" value="P:aortic valve formation"/>
    <property type="evidence" value="ECO:0000316"/>
    <property type="project" value="BHF-UCL"/>
</dbReference>
<dbReference type="GO" id="GO:0043297">
    <property type="term" value="P:apical junction assembly"/>
    <property type="evidence" value="ECO:0000315"/>
    <property type="project" value="UniProtKB"/>
</dbReference>
<dbReference type="GO" id="GO:0038027">
    <property type="term" value="P:apolipoprotein A-I-mediated signaling pathway"/>
    <property type="evidence" value="ECO:0000315"/>
    <property type="project" value="UniProtKB"/>
</dbReference>
<dbReference type="GO" id="GO:0043366">
    <property type="term" value="P:beta selection"/>
    <property type="evidence" value="ECO:0007669"/>
    <property type="project" value="Ensembl"/>
</dbReference>
<dbReference type="GO" id="GO:0061430">
    <property type="term" value="P:bone trabecula morphogenesis"/>
    <property type="evidence" value="ECO:0000250"/>
    <property type="project" value="BHF-UCL"/>
</dbReference>
<dbReference type="GO" id="GO:0034329">
    <property type="term" value="P:cell junction assembly"/>
    <property type="evidence" value="ECO:0000315"/>
    <property type="project" value="UniProtKB"/>
</dbReference>
<dbReference type="GO" id="GO:0016477">
    <property type="term" value="P:cell migration"/>
    <property type="evidence" value="ECO:0000314"/>
    <property type="project" value="UniProtKB"/>
</dbReference>
<dbReference type="GO" id="GO:0000902">
    <property type="term" value="P:cell morphogenesis"/>
    <property type="evidence" value="ECO:0007669"/>
    <property type="project" value="Ensembl"/>
</dbReference>
<dbReference type="GO" id="GO:0007160">
    <property type="term" value="P:cell-matrix adhesion"/>
    <property type="evidence" value="ECO:0007669"/>
    <property type="project" value="Ensembl"/>
</dbReference>
<dbReference type="GO" id="GO:1990869">
    <property type="term" value="P:cellular response to chemokine"/>
    <property type="evidence" value="ECO:0000315"/>
    <property type="project" value="UniProtKB"/>
</dbReference>
<dbReference type="GO" id="GO:0071345">
    <property type="term" value="P:cellular response to cytokine stimulus"/>
    <property type="evidence" value="ECO:0000315"/>
    <property type="project" value="ARUK-UCL"/>
</dbReference>
<dbReference type="GO" id="GO:0071222">
    <property type="term" value="P:cellular response to lipopolysaccharide"/>
    <property type="evidence" value="ECO:0000314"/>
    <property type="project" value="UniProtKB"/>
</dbReference>
<dbReference type="GO" id="GO:0021795">
    <property type="term" value="P:cerebral cortex cell migration"/>
    <property type="evidence" value="ECO:0007669"/>
    <property type="project" value="Ensembl"/>
</dbReference>
<dbReference type="GO" id="GO:0036089">
    <property type="term" value="P:cleavage furrow formation"/>
    <property type="evidence" value="ECO:0000314"/>
    <property type="project" value="UniProtKB"/>
</dbReference>
<dbReference type="GO" id="GO:0031122">
    <property type="term" value="P:cytoplasmic microtubule organization"/>
    <property type="evidence" value="ECO:0000315"/>
    <property type="project" value="UniProtKB"/>
</dbReference>
<dbReference type="GO" id="GO:0043542">
    <property type="term" value="P:endothelial cell migration"/>
    <property type="evidence" value="ECO:0000316"/>
    <property type="project" value="MGI"/>
</dbReference>
<dbReference type="GO" id="GO:0097498">
    <property type="term" value="P:endothelial tube lumen extension"/>
    <property type="evidence" value="ECO:0000316"/>
    <property type="project" value="MGI"/>
</dbReference>
<dbReference type="GO" id="GO:0045198">
    <property type="term" value="P:establishment of epithelial cell apical/basal polarity"/>
    <property type="evidence" value="ECO:0000315"/>
    <property type="project" value="UniProtKB"/>
</dbReference>
<dbReference type="GO" id="GO:0021861">
    <property type="term" value="P:forebrain radial glial cell differentiation"/>
    <property type="evidence" value="ECO:0007669"/>
    <property type="project" value="Ensembl"/>
</dbReference>
<dbReference type="GO" id="GO:0001822">
    <property type="term" value="P:kidney development"/>
    <property type="evidence" value="ECO:0007669"/>
    <property type="project" value="Ensembl"/>
</dbReference>
<dbReference type="GO" id="GO:1903673">
    <property type="term" value="P:mitotic cleavage furrow formation"/>
    <property type="evidence" value="ECO:0000315"/>
    <property type="project" value="UniProtKB"/>
</dbReference>
<dbReference type="GO" id="GO:0090307">
    <property type="term" value="P:mitotic spindle assembly"/>
    <property type="evidence" value="ECO:0000315"/>
    <property type="project" value="BHF-UCL"/>
</dbReference>
<dbReference type="GO" id="GO:0097049">
    <property type="term" value="P:motor neuron apoptotic process"/>
    <property type="evidence" value="ECO:0007669"/>
    <property type="project" value="Ensembl"/>
</dbReference>
<dbReference type="GO" id="GO:0050919">
    <property type="term" value="P:negative chemotaxis"/>
    <property type="evidence" value="ECO:0000315"/>
    <property type="project" value="UniProtKB"/>
</dbReference>
<dbReference type="GO" id="GO:0090051">
    <property type="term" value="P:negative regulation of cell migration involved in sprouting angiogenesis"/>
    <property type="evidence" value="ECO:0000316"/>
    <property type="project" value="MGI"/>
</dbReference>
<dbReference type="GO" id="GO:0045792">
    <property type="term" value="P:negative regulation of cell size"/>
    <property type="evidence" value="ECO:0000315"/>
    <property type="project" value="CAFA"/>
</dbReference>
<dbReference type="GO" id="GO:0010812">
    <property type="term" value="P:negative regulation of cell-substrate adhesion"/>
    <property type="evidence" value="ECO:0000250"/>
    <property type="project" value="ARUK-UCL"/>
</dbReference>
<dbReference type="GO" id="GO:0033144">
    <property type="term" value="P:negative regulation of intracellular steroid hormone receptor signaling pathway"/>
    <property type="evidence" value="ECO:0007669"/>
    <property type="project" value="Ensembl"/>
</dbReference>
<dbReference type="GO" id="GO:2000672">
    <property type="term" value="P:negative regulation of motor neuron apoptotic process"/>
    <property type="evidence" value="ECO:0007669"/>
    <property type="project" value="Ensembl"/>
</dbReference>
<dbReference type="GO" id="GO:0090324">
    <property type="term" value="P:negative regulation of oxidative phosphorylation"/>
    <property type="evidence" value="ECO:0007669"/>
    <property type="project" value="Ensembl"/>
</dbReference>
<dbReference type="GO" id="GO:1903427">
    <property type="term" value="P:negative regulation of reactive oxygen species biosynthetic process"/>
    <property type="evidence" value="ECO:0007669"/>
    <property type="project" value="Ensembl"/>
</dbReference>
<dbReference type="GO" id="GO:0001764">
    <property type="term" value="P:neuron migration"/>
    <property type="evidence" value="ECO:0007669"/>
    <property type="project" value="Ensembl"/>
</dbReference>
<dbReference type="GO" id="GO:0042476">
    <property type="term" value="P:odontogenesis"/>
    <property type="evidence" value="ECO:0007669"/>
    <property type="project" value="Ensembl"/>
</dbReference>
<dbReference type="GO" id="GO:0043931">
    <property type="term" value="P:ossification involved in bone maturation"/>
    <property type="evidence" value="ECO:0000250"/>
    <property type="project" value="BHF-UCL"/>
</dbReference>
<dbReference type="GO" id="GO:0046638">
    <property type="term" value="P:positive regulation of alpha-beta T cell differentiation"/>
    <property type="evidence" value="ECO:0007669"/>
    <property type="project" value="Ensembl"/>
</dbReference>
<dbReference type="GO" id="GO:0043123">
    <property type="term" value="P:positive regulation of canonical NF-kappaB signal transduction"/>
    <property type="evidence" value="ECO:0000315"/>
    <property type="project" value="ARUK-UCL"/>
</dbReference>
<dbReference type="GO" id="GO:0032467">
    <property type="term" value="P:positive regulation of cytokinesis"/>
    <property type="evidence" value="ECO:0000315"/>
    <property type="project" value="UniProtKB"/>
</dbReference>
<dbReference type="GO" id="GO:1904996">
    <property type="term" value="P:positive regulation of leukocyte adhesion to vascular endothelial cell"/>
    <property type="evidence" value="ECO:0000315"/>
    <property type="project" value="ARUK-UCL"/>
</dbReference>
<dbReference type="GO" id="GO:0060193">
    <property type="term" value="P:positive regulation of lipase activity"/>
    <property type="evidence" value="ECO:0000314"/>
    <property type="project" value="AgBase"/>
</dbReference>
<dbReference type="GO" id="GO:0045666">
    <property type="term" value="P:positive regulation of neuron differentiation"/>
    <property type="evidence" value="ECO:0000315"/>
    <property type="project" value="MGI"/>
</dbReference>
<dbReference type="GO" id="GO:1901224">
    <property type="term" value="P:positive regulation of non-canonical NF-kappaB signal transduction"/>
    <property type="evidence" value="ECO:0000303"/>
    <property type="project" value="UniProtKB"/>
</dbReference>
<dbReference type="GO" id="GO:0071803">
    <property type="term" value="P:positive regulation of podosome assembly"/>
    <property type="evidence" value="ECO:0007669"/>
    <property type="project" value="Ensembl"/>
</dbReference>
<dbReference type="GO" id="GO:0071902">
    <property type="term" value="P:positive regulation of protein serine/threonine kinase activity"/>
    <property type="evidence" value="ECO:0000314"/>
    <property type="project" value="UniProtKB"/>
</dbReference>
<dbReference type="GO" id="GO:0051496">
    <property type="term" value="P:positive regulation of stress fiber assembly"/>
    <property type="evidence" value="ECO:0000314"/>
    <property type="project" value="MGI"/>
</dbReference>
<dbReference type="GO" id="GO:2000406">
    <property type="term" value="P:positive regulation of T cell migration"/>
    <property type="evidence" value="ECO:0000315"/>
    <property type="project" value="UniProtKB"/>
</dbReference>
<dbReference type="GO" id="GO:1904695">
    <property type="term" value="P:positive regulation of vascular associated smooth muscle contraction"/>
    <property type="evidence" value="ECO:0007669"/>
    <property type="project" value="Ensembl"/>
</dbReference>
<dbReference type="GO" id="GO:0032956">
    <property type="term" value="P:regulation of actin cytoskeleton organization"/>
    <property type="evidence" value="ECO:0000314"/>
    <property type="project" value="UniProtKB"/>
</dbReference>
<dbReference type="GO" id="GO:0030334">
    <property type="term" value="P:regulation of cell migration"/>
    <property type="evidence" value="ECO:0000315"/>
    <property type="project" value="UniProtKB"/>
</dbReference>
<dbReference type="GO" id="GO:0051893">
    <property type="term" value="P:regulation of focal adhesion assembly"/>
    <property type="evidence" value="ECO:0000304"/>
    <property type="project" value="ARUK-UCL"/>
</dbReference>
<dbReference type="GO" id="GO:0070507">
    <property type="term" value="P:regulation of microtubule cytoskeleton organization"/>
    <property type="evidence" value="ECO:0007669"/>
    <property type="project" value="Ensembl"/>
</dbReference>
<dbReference type="GO" id="GO:1905274">
    <property type="term" value="P:regulation of modification of postsynaptic actin cytoskeleton"/>
    <property type="evidence" value="ECO:0000314"/>
    <property type="project" value="SynGO"/>
</dbReference>
<dbReference type="GO" id="GO:0099159">
    <property type="term" value="P:regulation of modification of postsynaptic structure"/>
    <property type="evidence" value="ECO:0000314"/>
    <property type="project" value="SynGO"/>
</dbReference>
<dbReference type="GO" id="GO:2000177">
    <property type="term" value="P:regulation of neural precursor cell proliferation"/>
    <property type="evidence" value="ECO:0007669"/>
    <property type="project" value="Ensembl"/>
</dbReference>
<dbReference type="GO" id="GO:0010975">
    <property type="term" value="P:regulation of neuron projection development"/>
    <property type="evidence" value="ECO:0007669"/>
    <property type="project" value="Ensembl"/>
</dbReference>
<dbReference type="GO" id="GO:0033688">
    <property type="term" value="P:regulation of osteoblast proliferation"/>
    <property type="evidence" value="ECO:0000250"/>
    <property type="project" value="BHF-UCL"/>
</dbReference>
<dbReference type="GO" id="GO:0003100">
    <property type="term" value="P:regulation of systemic arterial blood pressure by endothelin"/>
    <property type="evidence" value="ECO:0007669"/>
    <property type="project" value="Ensembl"/>
</dbReference>
<dbReference type="GO" id="GO:0006357">
    <property type="term" value="P:regulation of transcription by RNA polymerase II"/>
    <property type="evidence" value="ECO:0007669"/>
    <property type="project" value="Ensembl"/>
</dbReference>
<dbReference type="GO" id="GO:0007266">
    <property type="term" value="P:Rho protein signal transduction"/>
    <property type="evidence" value="ECO:0000314"/>
    <property type="project" value="UniProtKB"/>
</dbReference>
<dbReference type="GO" id="GO:0035385">
    <property type="term" value="P:Roundabout signaling pathway"/>
    <property type="evidence" value="ECO:0000314"/>
    <property type="project" value="UniProtKB"/>
</dbReference>
<dbReference type="GO" id="GO:0071526">
    <property type="term" value="P:semaphorin-plexin signaling pathway"/>
    <property type="evidence" value="ECO:0000250"/>
    <property type="project" value="BHF-UCL"/>
</dbReference>
<dbReference type="GO" id="GO:1902766">
    <property type="term" value="P:skeletal muscle satellite cell migration"/>
    <property type="evidence" value="ECO:0000250"/>
    <property type="project" value="AgBase"/>
</dbReference>
<dbReference type="GO" id="GO:0007519">
    <property type="term" value="P:skeletal muscle tissue development"/>
    <property type="evidence" value="ECO:0007669"/>
    <property type="project" value="Ensembl"/>
</dbReference>
<dbReference type="GO" id="GO:0043149">
    <property type="term" value="P:stress fiber assembly"/>
    <property type="evidence" value="ECO:0000315"/>
    <property type="project" value="UniProtKB"/>
</dbReference>
<dbReference type="GO" id="GO:0021762">
    <property type="term" value="P:substantia nigra development"/>
    <property type="evidence" value="ECO:0007007"/>
    <property type="project" value="UniProtKB"/>
</dbReference>
<dbReference type="GO" id="GO:0034446">
    <property type="term" value="P:substrate adhesion-dependent cell spreading"/>
    <property type="evidence" value="ECO:0000315"/>
    <property type="project" value="UniProtKB"/>
</dbReference>
<dbReference type="GO" id="GO:0060071">
    <property type="term" value="P:Wnt signaling pathway, planar cell polarity pathway"/>
    <property type="evidence" value="ECO:0000303"/>
    <property type="project" value="ParkinsonsUK-UCL"/>
</dbReference>
<dbReference type="GO" id="GO:0044319">
    <property type="term" value="P:wound healing, spreading of cells"/>
    <property type="evidence" value="ECO:0000250"/>
    <property type="project" value="AgBase"/>
</dbReference>
<dbReference type="CDD" id="cd01870">
    <property type="entry name" value="RhoA_like"/>
    <property type="match status" value="1"/>
</dbReference>
<dbReference type="FunFam" id="3.40.50.300:FF:000095">
    <property type="entry name" value="Rho-related GTP-binding protein RhoC"/>
    <property type="match status" value="1"/>
</dbReference>
<dbReference type="Gene3D" id="3.40.50.300">
    <property type="entry name" value="P-loop containing nucleotide triphosphate hydrolases"/>
    <property type="match status" value="1"/>
</dbReference>
<dbReference type="IDEAL" id="IID00274"/>
<dbReference type="InterPro" id="IPR027417">
    <property type="entry name" value="P-loop_NTPase"/>
</dbReference>
<dbReference type="InterPro" id="IPR005225">
    <property type="entry name" value="Small_GTP-bd"/>
</dbReference>
<dbReference type="InterPro" id="IPR001806">
    <property type="entry name" value="Small_GTPase"/>
</dbReference>
<dbReference type="InterPro" id="IPR003578">
    <property type="entry name" value="Small_GTPase_Rho"/>
</dbReference>
<dbReference type="NCBIfam" id="TIGR00231">
    <property type="entry name" value="small_GTP"/>
    <property type="match status" value="1"/>
</dbReference>
<dbReference type="PANTHER" id="PTHR24072">
    <property type="entry name" value="RHO FAMILY GTPASE"/>
    <property type="match status" value="1"/>
</dbReference>
<dbReference type="Pfam" id="PF00071">
    <property type="entry name" value="Ras"/>
    <property type="match status" value="1"/>
</dbReference>
<dbReference type="PRINTS" id="PR00449">
    <property type="entry name" value="RASTRNSFRMNG"/>
</dbReference>
<dbReference type="SMART" id="SM00175">
    <property type="entry name" value="RAB"/>
    <property type="match status" value="1"/>
</dbReference>
<dbReference type="SMART" id="SM00173">
    <property type="entry name" value="RAS"/>
    <property type="match status" value="1"/>
</dbReference>
<dbReference type="SMART" id="SM00174">
    <property type="entry name" value="RHO"/>
    <property type="match status" value="1"/>
</dbReference>
<dbReference type="SUPFAM" id="SSF52540">
    <property type="entry name" value="P-loop containing nucleoside triphosphate hydrolases"/>
    <property type="match status" value="1"/>
</dbReference>
<dbReference type="PROSITE" id="PS51420">
    <property type="entry name" value="RHO"/>
    <property type="match status" value="1"/>
</dbReference>
<evidence type="ECO:0000250" key="1">
    <source>
        <dbReference type="UniProtKB" id="P61585"/>
    </source>
</evidence>
<evidence type="ECO:0000250" key="2">
    <source>
        <dbReference type="UniProtKB" id="P61589"/>
    </source>
</evidence>
<evidence type="ECO:0000250" key="3">
    <source>
        <dbReference type="UniProtKB" id="P62820"/>
    </source>
</evidence>
<evidence type="ECO:0000250" key="4">
    <source>
        <dbReference type="UniProtKB" id="Q9QUI0"/>
    </source>
</evidence>
<evidence type="ECO:0000255" key="5"/>
<evidence type="ECO:0000269" key="6">
    <source>
    </source>
</evidence>
<evidence type="ECO:0000269" key="7">
    <source>
    </source>
</evidence>
<evidence type="ECO:0000269" key="8">
    <source>
    </source>
</evidence>
<evidence type="ECO:0000269" key="9">
    <source>
    </source>
</evidence>
<evidence type="ECO:0000269" key="10">
    <source>
    </source>
</evidence>
<evidence type="ECO:0000269" key="11">
    <source>
    </source>
</evidence>
<evidence type="ECO:0000269" key="12">
    <source>
    </source>
</evidence>
<evidence type="ECO:0000269" key="13">
    <source>
    </source>
</evidence>
<evidence type="ECO:0000269" key="14">
    <source>
    </source>
</evidence>
<evidence type="ECO:0000269" key="15">
    <source>
    </source>
</evidence>
<evidence type="ECO:0000269" key="16">
    <source>
    </source>
</evidence>
<evidence type="ECO:0000269" key="17">
    <source>
    </source>
</evidence>
<evidence type="ECO:0000269" key="18">
    <source>
    </source>
</evidence>
<evidence type="ECO:0000269" key="19">
    <source>
    </source>
</evidence>
<evidence type="ECO:0000269" key="20">
    <source>
    </source>
</evidence>
<evidence type="ECO:0000269" key="21">
    <source>
    </source>
</evidence>
<evidence type="ECO:0000269" key="22">
    <source>
    </source>
</evidence>
<evidence type="ECO:0000269" key="23">
    <source>
    </source>
</evidence>
<evidence type="ECO:0000269" key="24">
    <source>
    </source>
</evidence>
<evidence type="ECO:0000269" key="25">
    <source>
    </source>
</evidence>
<evidence type="ECO:0000269" key="26">
    <source>
    </source>
</evidence>
<evidence type="ECO:0000269" key="27">
    <source>
    </source>
</evidence>
<evidence type="ECO:0000269" key="28">
    <source>
    </source>
</evidence>
<evidence type="ECO:0000269" key="29">
    <source>
    </source>
</evidence>
<evidence type="ECO:0000269" key="30">
    <source>
    </source>
</evidence>
<evidence type="ECO:0000269" key="31">
    <source>
    </source>
</evidence>
<evidence type="ECO:0000269" key="32">
    <source>
    </source>
</evidence>
<evidence type="ECO:0000269" key="33">
    <source>
    </source>
</evidence>
<evidence type="ECO:0000269" key="34">
    <source>
    </source>
</evidence>
<evidence type="ECO:0000269" key="35">
    <source>
    </source>
</evidence>
<evidence type="ECO:0000269" key="36">
    <source>
    </source>
</evidence>
<evidence type="ECO:0000269" key="37">
    <source>
    </source>
</evidence>
<evidence type="ECO:0000269" key="38">
    <source>
    </source>
</evidence>
<evidence type="ECO:0000269" key="39">
    <source>
    </source>
</evidence>
<evidence type="ECO:0000269" key="40">
    <source>
    </source>
</evidence>
<evidence type="ECO:0000269" key="41">
    <source>
    </source>
</evidence>
<evidence type="ECO:0000269" key="42">
    <source>
    </source>
</evidence>
<evidence type="ECO:0000269" key="43">
    <source>
    </source>
</evidence>
<evidence type="ECO:0000269" key="44">
    <source>
    </source>
</evidence>
<evidence type="ECO:0000269" key="45">
    <source>
    </source>
</evidence>
<evidence type="ECO:0000269" key="46">
    <source>
    </source>
</evidence>
<evidence type="ECO:0000269" key="47">
    <source>
    </source>
</evidence>
<evidence type="ECO:0000269" key="48">
    <source>
    </source>
</evidence>
<evidence type="ECO:0000269" key="49">
    <source>
    </source>
</evidence>
<evidence type="ECO:0000269" key="50">
    <source>
    </source>
</evidence>
<evidence type="ECO:0000269" key="51">
    <source>
    </source>
</evidence>
<evidence type="ECO:0000269" key="52">
    <source>
    </source>
</evidence>
<evidence type="ECO:0000269" key="53">
    <source>
    </source>
</evidence>
<evidence type="ECO:0000269" key="54">
    <source>
    </source>
</evidence>
<evidence type="ECO:0000305" key="55"/>
<evidence type="ECO:0000305" key="56">
    <source>
    </source>
</evidence>
<evidence type="ECO:0000305" key="57">
    <source>
    </source>
</evidence>
<evidence type="ECO:0000305" key="58">
    <source>
    </source>
</evidence>
<evidence type="ECO:0000305" key="59">
    <source>
    </source>
</evidence>
<evidence type="ECO:0000312" key="60">
    <source>
        <dbReference type="HGNC" id="HGNC:667"/>
    </source>
</evidence>
<evidence type="ECO:0007744" key="61">
    <source>
        <dbReference type="PDB" id="5ZHX"/>
    </source>
</evidence>
<evidence type="ECO:0007829" key="62">
    <source>
        <dbReference type="PDB" id="5FR1"/>
    </source>
</evidence>
<evidence type="ECO:0007829" key="63">
    <source>
        <dbReference type="PDB" id="5FR2"/>
    </source>
</evidence>
<evidence type="ECO:0007829" key="64">
    <source>
        <dbReference type="PDB" id="5ZHX"/>
    </source>
</evidence>
<evidence type="ECO:0007829" key="65">
    <source>
        <dbReference type="PDB" id="6V6U"/>
    </source>
</evidence>
<evidence type="ECO:0007829" key="66">
    <source>
        <dbReference type="PDB" id="7G8G"/>
    </source>
</evidence>
<evidence type="ECO:0007829" key="67">
    <source>
        <dbReference type="PDB" id="8BNT"/>
    </source>
</evidence>
<proteinExistence type="evidence at protein level"/>
<keyword id="KW-0002">3D-structure</keyword>
<keyword id="KW-0013">ADP-ribosylation</keyword>
<keyword id="KW-0131">Cell cycle</keyword>
<keyword id="KW-0132">Cell division</keyword>
<keyword id="KW-1003">Cell membrane</keyword>
<keyword id="KW-0966">Cell projection</keyword>
<keyword id="KW-0963">Cytoplasm</keyword>
<keyword id="KW-0206">Cytoskeleton</keyword>
<keyword id="KW-0903">Direct protein sequencing</keyword>
<keyword id="KW-0225">Disease variant</keyword>
<keyword id="KW-0038">Ectodermal dysplasia</keyword>
<keyword id="KW-0325">Glycoprotein</keyword>
<keyword id="KW-0342">GTP-binding</keyword>
<keyword id="KW-0945">Host-virus interaction</keyword>
<keyword id="KW-0378">Hydrolase</keyword>
<keyword id="KW-1017">Isopeptide bond</keyword>
<keyword id="KW-0449">Lipoprotein</keyword>
<keyword id="KW-0460">Magnesium</keyword>
<keyword id="KW-0472">Membrane</keyword>
<keyword id="KW-0488">Methylation</keyword>
<keyword id="KW-0547">Nucleotide-binding</keyword>
<keyword id="KW-0539">Nucleus</keyword>
<keyword id="KW-0597">Phosphoprotein</keyword>
<keyword id="KW-0636">Prenylation</keyword>
<keyword id="KW-1267">Proteomics identification</keyword>
<keyword id="KW-0656">Proto-oncogene</keyword>
<keyword id="KW-1185">Reference proteome</keyword>
<keyword id="KW-0832">Ubl conjugation</keyword>
<sequence length="193" mass="21768">MAAIRKKLVIVGDGACGKTCLLIVFSKDQFPEVYVPTVFENYVADIEVDGKQVELALWDTAGQEDYDRLRPLSYPDTDVILMCFSIDSPDSLENIPEKWTPEVKHFCPNVPIILVGNKKDLRNDEHTRRELAKMKQEPVKPEEGRDMANRIGAFGYMECSAKTKDGVREVFEMATRAALQARRGKKKSGCLVL</sequence>